<dbReference type="EMBL" id="X82835">
    <property type="protein sequence ID" value="CAA58042.1"/>
    <property type="molecule type" value="mRNA"/>
</dbReference>
<dbReference type="EMBL" id="DQ857292">
    <property type="protein sequence ID" value="ABI51981.1"/>
    <property type="molecule type" value="mRNA"/>
</dbReference>
<dbReference type="EMBL" id="AC074101">
    <property type="status" value="NOT_ANNOTATED_CDS"/>
    <property type="molecule type" value="Genomic_DNA"/>
</dbReference>
<dbReference type="EMBL" id="AC107082">
    <property type="status" value="NOT_ANNOTATED_CDS"/>
    <property type="molecule type" value="Genomic_DNA"/>
</dbReference>
<dbReference type="EMBL" id="AC108146">
    <property type="status" value="NOT_ANNOTATED_CDS"/>
    <property type="molecule type" value="Genomic_DNA"/>
</dbReference>
<dbReference type="EMBL" id="AY682084">
    <property type="protein sequence ID" value="AAT85833.1"/>
    <property type="molecule type" value="mRNA"/>
</dbReference>
<dbReference type="EMBL" id="AY682085">
    <property type="protein sequence ID" value="AAT85834.1"/>
    <property type="molecule type" value="mRNA"/>
</dbReference>
<dbReference type="EMBL" id="AY682086">
    <property type="protein sequence ID" value="AAT85835.1"/>
    <property type="molecule type" value="mRNA"/>
</dbReference>
<dbReference type="EMBL" id="AJ310882">
    <property type="protein sequence ID" value="CAC84550.1"/>
    <property type="molecule type" value="mRNA"/>
</dbReference>
<dbReference type="EMBL" id="AJ310883">
    <property type="protein sequence ID" value="CAC84551.1"/>
    <property type="molecule type" value="mRNA"/>
</dbReference>
<dbReference type="EMBL" id="AJ310897">
    <property type="protein sequence ID" value="CAC84537.1"/>
    <property type="molecule type" value="mRNA"/>
</dbReference>
<dbReference type="EMBL" id="AJ580918">
    <property type="protein sequence ID" value="CAE45644.1"/>
    <property type="molecule type" value="Genomic_DNA"/>
</dbReference>
<dbReference type="EMBL" id="AJ580919">
    <property type="protein sequence ID" value="CAE45645.1"/>
    <property type="molecule type" value="Genomic_DNA"/>
</dbReference>
<dbReference type="CCDS" id="CCDS46441.1">
    <molecule id="Q15858-3"/>
</dbReference>
<dbReference type="CCDS" id="CCDS92892.1">
    <molecule id="Q15858-1"/>
</dbReference>
<dbReference type="PIR" id="S54771">
    <property type="entry name" value="S54771"/>
</dbReference>
<dbReference type="RefSeq" id="NP_001352465.1">
    <molecule id="Q15858-1"/>
    <property type="nucleotide sequence ID" value="NM_001365536.1"/>
</dbReference>
<dbReference type="RefSeq" id="NP_002968.2">
    <molecule id="Q15858-3"/>
    <property type="nucleotide sequence ID" value="NM_002977.4"/>
</dbReference>
<dbReference type="RefSeq" id="XP_005246814.1">
    <property type="nucleotide sequence ID" value="XM_005246757.2"/>
</dbReference>
<dbReference type="RefSeq" id="XP_011509918.1">
    <molecule id="Q15858-1"/>
    <property type="nucleotide sequence ID" value="XM_011511616.4"/>
</dbReference>
<dbReference type="RefSeq" id="XP_011509919.1">
    <molecule id="Q15858-2"/>
    <property type="nucleotide sequence ID" value="XM_011511617.3"/>
</dbReference>
<dbReference type="RefSeq" id="XP_011509920.1">
    <molecule id="Q15858-4"/>
    <property type="nucleotide sequence ID" value="XM_011511618.3"/>
</dbReference>
<dbReference type="PDB" id="5EK0">
    <property type="method" value="X-ray"/>
    <property type="resolution" value="3.53 A"/>
    <property type="chains" value="A/B/C/D=1527-1559, A/B/C/D=1581-1622"/>
</dbReference>
<dbReference type="PDB" id="6J8G">
    <property type="method" value="EM"/>
    <property type="resolution" value="3.20 A"/>
    <property type="chains" value="A=1-1988"/>
</dbReference>
<dbReference type="PDB" id="6J8H">
    <property type="method" value="EM"/>
    <property type="resolution" value="3.20 A"/>
    <property type="chains" value="A=1-1988"/>
</dbReference>
<dbReference type="PDB" id="6J8I">
    <property type="method" value="EM"/>
    <property type="resolution" value="3.20 A"/>
    <property type="chains" value="A=1-1988"/>
</dbReference>
<dbReference type="PDB" id="6J8J">
    <property type="method" value="EM"/>
    <property type="resolution" value="3.20 A"/>
    <property type="chains" value="A=1-1988"/>
</dbReference>
<dbReference type="PDB" id="6N4Q">
    <property type="method" value="EM"/>
    <property type="resolution" value="3.60 A"/>
    <property type="chains" value="A/B/C/D=758-788, A/B/C/D=813-843"/>
</dbReference>
<dbReference type="PDB" id="6N4R">
    <property type="method" value="EM"/>
    <property type="resolution" value="4.20 A"/>
    <property type="chains" value="A/B/C/D=758-788, A/B/C/D=813-843"/>
</dbReference>
<dbReference type="PDB" id="6NT3">
    <property type="method" value="EM"/>
    <property type="resolution" value="3.40 A"/>
    <property type="chains" value="A=257-275, A=1501-1631"/>
</dbReference>
<dbReference type="PDB" id="6NT4">
    <property type="method" value="EM"/>
    <property type="resolution" value="3.50 A"/>
    <property type="chains" value="A=257-275, A=1501-1631"/>
</dbReference>
<dbReference type="PDB" id="6VXO">
    <property type="method" value="EM"/>
    <property type="resolution" value="3.50 A"/>
    <property type="chains" value="A/C/D/E=817-835"/>
</dbReference>
<dbReference type="PDB" id="6W6O">
    <property type="method" value="EM"/>
    <property type="resolution" value="3.20 A"/>
    <property type="chains" value="A/D/F/H=817-835"/>
</dbReference>
<dbReference type="PDB" id="7K48">
    <property type="method" value="EM"/>
    <property type="resolution" value="3.60 A"/>
    <property type="chains" value="A/B/C/D=751-790, A/B/C/D=817-841"/>
</dbReference>
<dbReference type="PDB" id="7W9K">
    <property type="method" value="EM"/>
    <property type="resolution" value="2.20 A"/>
    <property type="chains" value="A=1-1988"/>
</dbReference>
<dbReference type="PDB" id="7W9L">
    <property type="method" value="EM"/>
    <property type="resolution" value="3.50 A"/>
    <property type="chains" value="A=1-1988"/>
</dbReference>
<dbReference type="PDB" id="7W9M">
    <property type="method" value="EM"/>
    <property type="resolution" value="3.00 A"/>
    <property type="chains" value="A=1-1988"/>
</dbReference>
<dbReference type="PDB" id="7W9P">
    <property type="method" value="EM"/>
    <property type="resolution" value="2.90 A"/>
    <property type="chains" value="A=1-1988"/>
</dbReference>
<dbReference type="PDB" id="7W9T">
    <property type="method" value="EM"/>
    <property type="resolution" value="3.00 A"/>
    <property type="chains" value="A=1-1988"/>
</dbReference>
<dbReference type="PDB" id="7XM9">
    <property type="method" value="EM"/>
    <property type="resolution" value="3.22 A"/>
    <property type="chains" value="A=1-1988"/>
</dbReference>
<dbReference type="PDB" id="7XMF">
    <property type="method" value="EM"/>
    <property type="resolution" value="3.07 A"/>
    <property type="chains" value="A=1-1988"/>
</dbReference>
<dbReference type="PDB" id="7XMG">
    <property type="method" value="EM"/>
    <property type="resolution" value="3.09 A"/>
    <property type="chains" value="A=1-1988"/>
</dbReference>
<dbReference type="PDB" id="7XVE">
    <property type="method" value="EM"/>
    <property type="resolution" value="2.70 A"/>
    <property type="chains" value="A=1-1988"/>
</dbReference>
<dbReference type="PDB" id="7XVF">
    <property type="method" value="EM"/>
    <property type="resolution" value="2.80 A"/>
    <property type="chains" value="A=1-1988"/>
</dbReference>
<dbReference type="PDB" id="8F0P">
    <property type="method" value="EM"/>
    <property type="resolution" value="2.20 A"/>
    <property type="chains" value="A=257-275, A=1501-1631"/>
</dbReference>
<dbReference type="PDB" id="8F0Q">
    <property type="method" value="EM"/>
    <property type="resolution" value="2.50 A"/>
    <property type="chains" value="A=257-275, A=1501-1631"/>
</dbReference>
<dbReference type="PDB" id="8F0R">
    <property type="method" value="EM"/>
    <property type="resolution" value="2.90 A"/>
    <property type="chains" value="A=257-275, A=1501-1631"/>
</dbReference>
<dbReference type="PDB" id="8F0S">
    <property type="method" value="EM"/>
    <property type="resolution" value="3.10 A"/>
    <property type="chains" value="A=257-275, A=1501-1631"/>
</dbReference>
<dbReference type="PDB" id="8G1A">
    <property type="method" value="EM"/>
    <property type="resolution" value="2.80 A"/>
    <property type="chains" value="A=1-1988"/>
</dbReference>
<dbReference type="PDB" id="8I5B">
    <property type="method" value="EM"/>
    <property type="resolution" value="2.70 A"/>
    <property type="chains" value="A=1-1988"/>
</dbReference>
<dbReference type="PDB" id="8I5G">
    <property type="method" value="EM"/>
    <property type="resolution" value="2.70 A"/>
    <property type="chains" value="A=1-1988"/>
</dbReference>
<dbReference type="PDB" id="8I5X">
    <property type="method" value="EM"/>
    <property type="resolution" value="2.90 A"/>
    <property type="chains" value="A=1-1988"/>
</dbReference>
<dbReference type="PDB" id="8I5Y">
    <property type="method" value="EM"/>
    <property type="resolution" value="2.60 A"/>
    <property type="chains" value="A=1-1988"/>
</dbReference>
<dbReference type="PDB" id="8J4F">
    <property type="method" value="EM"/>
    <property type="resolution" value="3.00 A"/>
    <property type="chains" value="A=1-1988"/>
</dbReference>
<dbReference type="PDB" id="8S9B">
    <property type="method" value="EM"/>
    <property type="resolution" value="2.90 A"/>
    <property type="chains" value="A=1-1988"/>
</dbReference>
<dbReference type="PDB" id="8S9C">
    <property type="method" value="EM"/>
    <property type="resolution" value="3.20 A"/>
    <property type="chains" value="A=1-1988"/>
</dbReference>
<dbReference type="PDB" id="8THG">
    <property type="method" value="EM"/>
    <property type="resolution" value="2.90 A"/>
    <property type="chains" value="A=1-1988"/>
</dbReference>
<dbReference type="PDB" id="8THH">
    <property type="method" value="EM"/>
    <property type="resolution" value="2.70 A"/>
    <property type="chains" value="A=1-1988"/>
</dbReference>
<dbReference type="PDB" id="8XMM">
    <property type="method" value="EM"/>
    <property type="resolution" value="2.89 A"/>
    <property type="chains" value="A=1-1988"/>
</dbReference>
<dbReference type="PDB" id="8XMN">
    <property type="method" value="EM"/>
    <property type="resolution" value="3.37 A"/>
    <property type="chains" value="A=1-1988"/>
</dbReference>
<dbReference type="PDB" id="8XMO">
    <property type="method" value="EM"/>
    <property type="resolution" value="3.39 A"/>
    <property type="chains" value="A=1-1988"/>
</dbReference>
<dbReference type="PDB" id="8YHZ">
    <property type="method" value="X-ray"/>
    <property type="resolution" value="1.62 A"/>
    <property type="chains" value="P=764-774"/>
</dbReference>
<dbReference type="PDBsum" id="5EK0"/>
<dbReference type="PDBsum" id="6J8G"/>
<dbReference type="PDBsum" id="6J8H"/>
<dbReference type="PDBsum" id="6J8I"/>
<dbReference type="PDBsum" id="6J8J"/>
<dbReference type="PDBsum" id="6N4Q"/>
<dbReference type="PDBsum" id="6N4R"/>
<dbReference type="PDBsum" id="6NT3"/>
<dbReference type="PDBsum" id="6NT4"/>
<dbReference type="PDBsum" id="6VXO"/>
<dbReference type="PDBsum" id="6W6O"/>
<dbReference type="PDBsum" id="7K48"/>
<dbReference type="PDBsum" id="7W9K"/>
<dbReference type="PDBsum" id="7W9L"/>
<dbReference type="PDBsum" id="7W9M"/>
<dbReference type="PDBsum" id="7W9P"/>
<dbReference type="PDBsum" id="7W9T"/>
<dbReference type="PDBsum" id="7XM9"/>
<dbReference type="PDBsum" id="7XMF"/>
<dbReference type="PDBsum" id="7XMG"/>
<dbReference type="PDBsum" id="7XVE"/>
<dbReference type="PDBsum" id="7XVF"/>
<dbReference type="PDBsum" id="8F0P"/>
<dbReference type="PDBsum" id="8F0Q"/>
<dbReference type="PDBsum" id="8F0R"/>
<dbReference type="PDBsum" id="8F0S"/>
<dbReference type="PDBsum" id="8G1A"/>
<dbReference type="PDBsum" id="8I5B"/>
<dbReference type="PDBsum" id="8I5G"/>
<dbReference type="PDBsum" id="8I5X"/>
<dbReference type="PDBsum" id="8I5Y"/>
<dbReference type="PDBsum" id="8J4F"/>
<dbReference type="PDBsum" id="8S9B"/>
<dbReference type="PDBsum" id="8S9C"/>
<dbReference type="PDBsum" id="8THG"/>
<dbReference type="PDBsum" id="8THH"/>
<dbReference type="PDBsum" id="8XMM"/>
<dbReference type="PDBsum" id="8XMN"/>
<dbReference type="PDBsum" id="8XMO"/>
<dbReference type="PDBsum" id="8YHZ"/>
<dbReference type="EMDB" id="EMD-29665"/>
<dbReference type="EMDB" id="EMD-32368"/>
<dbReference type="EMDB" id="EMD-32369"/>
<dbReference type="EMDB" id="EMD-32370"/>
<dbReference type="EMDB" id="EMD-32371"/>
<dbReference type="EMDB" id="EMD-32372"/>
<dbReference type="EMDB" id="EMD-33292"/>
<dbReference type="EMDB" id="EMD-33295"/>
<dbReference type="EMDB" id="EMD-33296"/>
<dbReference type="EMDB" id="EMD-33484"/>
<dbReference type="EMDB" id="EMD-33485"/>
<dbReference type="EMDB" id="EMD-35193"/>
<dbReference type="EMDB" id="EMD-35194"/>
<dbReference type="EMDB" id="EMD-35197"/>
<dbReference type="EMDB" id="EMD-35198"/>
<dbReference type="EMDB" id="EMD-35975"/>
<dbReference type="EMDB" id="EMD-38482"/>
<dbReference type="EMDB" id="EMD-38483"/>
<dbReference type="EMDB" id="EMD-38484"/>
<dbReference type="EMDB" id="EMD-40238"/>
<dbReference type="EMDB" id="EMD-40239"/>
<dbReference type="EMDB" id="EMD-41261"/>
<dbReference type="EMDB" id="EMD-41262"/>
<dbReference type="EMDB" id="EMD-9781"/>
<dbReference type="EMDB" id="EMD-9782"/>
<dbReference type="SMR" id="Q15858"/>
<dbReference type="BioGRID" id="112239">
    <property type="interactions" value="11"/>
</dbReference>
<dbReference type="ComplexPortal" id="CPX-8677">
    <property type="entry name" value="Nav1.7 voltage-gated sodium channel complex, SCN1B-SCN2B variant"/>
</dbReference>
<dbReference type="ComplexPortal" id="CPX-8678">
    <property type="entry name" value="Nav1.7 voltage-gated sodium channel complex, SCN1B-SCN4B variant"/>
</dbReference>
<dbReference type="ComplexPortal" id="CPX-8679">
    <property type="entry name" value="Nav1.7 voltage-gated sodium channel complex, SCN3B-SCN4B variant"/>
</dbReference>
<dbReference type="ComplexPortal" id="CPX-8680">
    <property type="entry name" value="Nav1.7 voltage-gated sodium channel complex, SCN2B-SCN3B variant"/>
</dbReference>
<dbReference type="CORUM" id="Q15858"/>
<dbReference type="FunCoup" id="Q15858">
    <property type="interactions" value="551"/>
</dbReference>
<dbReference type="IntAct" id="Q15858">
    <property type="interactions" value="10"/>
</dbReference>
<dbReference type="MINT" id="Q15858"/>
<dbReference type="STRING" id="9606.ENSP00000386306"/>
<dbReference type="BindingDB" id="Q15858"/>
<dbReference type="ChEMBL" id="CHEMBL4296"/>
<dbReference type="DrugBank" id="DB09088">
    <property type="generic name" value="Amylocaine"/>
</dbReference>
<dbReference type="DrugBank" id="DB09009">
    <property type="generic name" value="Articaine"/>
</dbReference>
<dbReference type="DrugBank" id="DB13746">
    <property type="generic name" value="Bioallethrin"/>
</dbReference>
<dbReference type="DrugBank" id="DB05541">
    <property type="generic name" value="Brivaracetam"/>
</dbReference>
<dbReference type="DrugBank" id="DB00564">
    <property type="generic name" value="Carbamazepine"/>
</dbReference>
<dbReference type="DrugBank" id="DB06119">
    <property type="generic name" value="Cenobamate"/>
</dbReference>
<dbReference type="DrugBank" id="DB01161">
    <property type="generic name" value="Chloroprocaine"/>
</dbReference>
<dbReference type="DrugBank" id="DB00907">
    <property type="generic name" value="Cocaine"/>
</dbReference>
<dbReference type="DrugBank" id="DB13269">
    <property type="generic name" value="Dichlorobenzyl alcohol"/>
</dbReference>
<dbReference type="DrugBank" id="DB13961">
    <property type="generic name" value="Fish oil"/>
</dbReference>
<dbReference type="DrugBank" id="DB11769">
    <property type="generic name" value="Funapide"/>
</dbReference>
<dbReference type="DrugBank" id="DB06218">
    <property type="generic name" value="Lacosamide"/>
</dbReference>
<dbReference type="DrugBank" id="DB00555">
    <property type="generic name" value="Lamotrigine"/>
</dbReference>
<dbReference type="DrugBank" id="DB00281">
    <property type="generic name" value="Lidocaine"/>
</dbReference>
<dbReference type="DrugBank" id="DB00776">
    <property type="generic name" value="Oxcarbazepine"/>
</dbReference>
<dbReference type="DrugBank" id="DB11186">
    <property type="generic name" value="Pentoxyverine"/>
</dbReference>
<dbReference type="DrugBank" id="DB14856">
    <property type="generic name" value="PF-05089771"/>
</dbReference>
<dbReference type="DrugBank" id="DB15124">
    <property type="generic name" value="PF-05241328"/>
</dbReference>
<dbReference type="DrugBank" id="DB09345">
    <property type="generic name" value="Pramocaine"/>
</dbReference>
<dbReference type="DrugBank" id="DB01069">
    <property type="generic name" value="Promethazine"/>
</dbReference>
<dbReference type="DrugBank" id="DB09342">
    <property type="generic name" value="Propoxycaine"/>
</dbReference>
<dbReference type="DrugBank" id="DB00243">
    <property type="generic name" value="Ranolazine"/>
</dbReference>
<dbReference type="DrugBank" id="DB06201">
    <property type="generic name" value="Rufinamide"/>
</dbReference>
<dbReference type="DrugBank" id="DB09085">
    <property type="generic name" value="Tetracaine"/>
</dbReference>
<dbReference type="DrugBank" id="DB00273">
    <property type="generic name" value="Topiramate"/>
</dbReference>
<dbReference type="DrugBank" id="DB00313">
    <property type="generic name" value="Valproic acid"/>
</dbReference>
<dbReference type="DrugBank" id="DB11706">
    <property type="generic name" value="Vixotrigine"/>
</dbReference>
<dbReference type="DrugBank" id="DB00909">
    <property type="generic name" value="Zonisamide"/>
</dbReference>
<dbReference type="DrugCentral" id="Q15858"/>
<dbReference type="GuidetoPHARMACOLOGY" id="584"/>
<dbReference type="TCDB" id="1.A.1.10.5">
    <property type="family name" value="the voltage-gated ion channel (vic) superfamily"/>
</dbReference>
<dbReference type="GlyCosmos" id="Q15858">
    <property type="glycosylation" value="5 sites, No reported glycans"/>
</dbReference>
<dbReference type="GlyGen" id="Q15858">
    <property type="glycosylation" value="6 sites, 2 N-linked glycans (3 sites), 1 O-linked glycan (1 site)"/>
</dbReference>
<dbReference type="iPTMnet" id="Q15858"/>
<dbReference type="PhosphoSitePlus" id="Q15858"/>
<dbReference type="BioMuta" id="SCN9A"/>
<dbReference type="DMDM" id="327478559"/>
<dbReference type="MassIVE" id="Q15858"/>
<dbReference type="PaxDb" id="9606-ENSP00000386306"/>
<dbReference type="PeptideAtlas" id="Q15858"/>
<dbReference type="ProteomicsDB" id="60797">
    <molecule id="Q15858-1"/>
</dbReference>
<dbReference type="ProteomicsDB" id="60798">
    <molecule id="Q15858-2"/>
</dbReference>
<dbReference type="ProteomicsDB" id="60799">
    <molecule id="Q15858-3"/>
</dbReference>
<dbReference type="ABCD" id="Q15858">
    <property type="antibodies" value="2 sequenced antibodies"/>
</dbReference>
<dbReference type="Antibodypedia" id="33781">
    <property type="antibodies" value="496 antibodies from 39 providers"/>
</dbReference>
<dbReference type="DNASU" id="6335"/>
<dbReference type="Ensembl" id="ENST00000303354.11">
    <molecule id="Q15858-1"/>
    <property type="protein sequence ID" value="ENSP00000304748.7"/>
    <property type="gene ID" value="ENSG00000169432.19"/>
</dbReference>
<dbReference type="Ensembl" id="ENST00000409672.5">
    <molecule id="Q15858-3"/>
    <property type="protein sequence ID" value="ENSP00000386306.1"/>
    <property type="gene ID" value="ENSG00000169432.19"/>
</dbReference>
<dbReference type="Ensembl" id="ENST00000642356.2">
    <molecule id="Q15858-1"/>
    <property type="protein sequence ID" value="ENSP00000495601.1"/>
    <property type="gene ID" value="ENSG00000169432.19"/>
</dbReference>
<dbReference type="Ensembl" id="ENST00000645907.1">
    <molecule id="Q15858-4"/>
    <property type="protein sequence ID" value="ENSP00000495983.1"/>
    <property type="gene ID" value="ENSG00000169432.19"/>
</dbReference>
<dbReference type="GeneID" id="6335"/>
<dbReference type="KEGG" id="hsa:6335"/>
<dbReference type="MANE-Select" id="ENST00000642356.2">
    <property type="protein sequence ID" value="ENSP00000495601.1"/>
    <property type="RefSeq nucleotide sequence ID" value="NM_001365536.1"/>
    <property type="RefSeq protein sequence ID" value="NP_001352465.1"/>
</dbReference>
<dbReference type="UCSC" id="uc002udr.2">
    <molecule id="Q15858-1"/>
    <property type="organism name" value="human"/>
</dbReference>
<dbReference type="AGR" id="HGNC:10597"/>
<dbReference type="CTD" id="6335"/>
<dbReference type="DisGeNET" id="6335"/>
<dbReference type="GeneCards" id="SCN9A"/>
<dbReference type="GeneReviews" id="SCN9A"/>
<dbReference type="HGNC" id="HGNC:10597">
    <property type="gene designation" value="SCN9A"/>
</dbReference>
<dbReference type="HPA" id="ENSG00000169432">
    <property type="expression patterns" value="Tissue enhanced (brain)"/>
</dbReference>
<dbReference type="MalaCards" id="SCN9A"/>
<dbReference type="MIM" id="133020">
    <property type="type" value="phenotype"/>
</dbReference>
<dbReference type="MIM" id="167400">
    <property type="type" value="phenotype"/>
</dbReference>
<dbReference type="MIM" id="243000">
    <property type="type" value="phenotype"/>
</dbReference>
<dbReference type="MIM" id="603415">
    <property type="type" value="gene"/>
</dbReference>
<dbReference type="neXtProt" id="NX_Q15858"/>
<dbReference type="OpenTargets" id="ENSG00000169432"/>
<dbReference type="Orphanet" id="88642">
    <property type="disease" value="Congenital insensitivity to pain-anosmia-neuropathic arthropathy"/>
</dbReference>
<dbReference type="Orphanet" id="33069">
    <property type="disease" value="Dravet syndrome"/>
</dbReference>
<dbReference type="Orphanet" id="36387">
    <property type="disease" value="Genetic epilepsy with febrile seizure plus"/>
</dbReference>
<dbReference type="Orphanet" id="970">
    <property type="disease" value="Hereditary sensory and autonomic neuropathy type 2"/>
</dbReference>
<dbReference type="Orphanet" id="306577">
    <property type="disease" value="Hereditary sodium channelopathy-related small fibers neuropathy"/>
</dbReference>
<dbReference type="Orphanet" id="46348">
    <property type="disease" value="Paroxysmal extreme pain disorder"/>
</dbReference>
<dbReference type="Orphanet" id="90026">
    <property type="disease" value="Primary erythromelalgia"/>
</dbReference>
<dbReference type="PharmGKB" id="PA35010"/>
<dbReference type="VEuPathDB" id="HostDB:ENSG00000169432"/>
<dbReference type="eggNOG" id="KOG2301">
    <property type="taxonomic scope" value="Eukaryota"/>
</dbReference>
<dbReference type="GeneTree" id="ENSGT00940000161368"/>
<dbReference type="HOGENOM" id="CLU_000540_5_0_1"/>
<dbReference type="InParanoid" id="Q15858"/>
<dbReference type="OMA" id="VPHRPKE"/>
<dbReference type="OrthoDB" id="2984333at2759"/>
<dbReference type="PAN-GO" id="Q15858">
    <property type="GO annotations" value="6 GO annotations based on evolutionary models"/>
</dbReference>
<dbReference type="PhylomeDB" id="Q15858"/>
<dbReference type="TreeFam" id="TF323985"/>
<dbReference type="PathwayCommons" id="Q15858"/>
<dbReference type="Reactome" id="R-HSA-445095">
    <property type="pathway name" value="Interaction between L1 and Ankyrins"/>
</dbReference>
<dbReference type="Reactome" id="R-HSA-5576892">
    <property type="pathway name" value="Phase 0 - rapid depolarisation"/>
</dbReference>
<dbReference type="Reactome" id="R-HSA-9717207">
    <property type="pathway name" value="Sensory perception of sweet, bitter, and umami (glutamate) taste"/>
</dbReference>
<dbReference type="SignaLink" id="Q15858"/>
<dbReference type="SIGNOR" id="Q15858"/>
<dbReference type="BioGRID-ORCS" id="6335">
    <property type="hits" value="7 hits in 1169 CRISPR screens"/>
</dbReference>
<dbReference type="ChiTaRS" id="SCN9A">
    <property type="organism name" value="human"/>
</dbReference>
<dbReference type="GeneWiki" id="Nav1.7"/>
<dbReference type="GenomeRNAi" id="6335"/>
<dbReference type="Pharos" id="Q15858">
    <property type="development level" value="Tclin"/>
</dbReference>
<dbReference type="PRO" id="PR:Q15858"/>
<dbReference type="Proteomes" id="UP000005640">
    <property type="component" value="Chromosome 2"/>
</dbReference>
<dbReference type="RNAct" id="Q15858">
    <property type="molecule type" value="protein"/>
</dbReference>
<dbReference type="Bgee" id="ENSG00000169432">
    <property type="expression patterns" value="Expressed in sural nerve and 122 other cell types or tissues"/>
</dbReference>
<dbReference type="ExpressionAtlas" id="Q15858">
    <property type="expression patterns" value="baseline and differential"/>
</dbReference>
<dbReference type="GO" id="GO:0030424">
    <property type="term" value="C:axon"/>
    <property type="evidence" value="ECO:0000250"/>
    <property type="project" value="ARUK-UCL"/>
</dbReference>
<dbReference type="GO" id="GO:0043679">
    <property type="term" value="C:axon terminus"/>
    <property type="evidence" value="ECO:0000314"/>
    <property type="project" value="UniProtKB"/>
</dbReference>
<dbReference type="GO" id="GO:0033268">
    <property type="term" value="C:node of Ranvier"/>
    <property type="evidence" value="ECO:0000314"/>
    <property type="project" value="UniProtKB"/>
</dbReference>
<dbReference type="GO" id="GO:0005886">
    <property type="term" value="C:plasma membrane"/>
    <property type="evidence" value="ECO:0000315"/>
    <property type="project" value="UniProtKB"/>
</dbReference>
<dbReference type="GO" id="GO:0001518">
    <property type="term" value="C:voltage-gated sodium channel complex"/>
    <property type="evidence" value="ECO:0000318"/>
    <property type="project" value="GO_Central"/>
</dbReference>
<dbReference type="GO" id="GO:0005248">
    <property type="term" value="F:voltage-gated sodium channel activity"/>
    <property type="evidence" value="ECO:0000314"/>
    <property type="project" value="UniProtKB"/>
</dbReference>
<dbReference type="GO" id="GO:0098870">
    <property type="term" value="P:action potential propagation"/>
    <property type="evidence" value="ECO:0000314"/>
    <property type="project" value="UniProtKB"/>
</dbReference>
<dbReference type="GO" id="GO:0048266">
    <property type="term" value="P:behavioral response to pain"/>
    <property type="evidence" value="ECO:0007669"/>
    <property type="project" value="Ensembl"/>
</dbReference>
<dbReference type="GO" id="GO:0086002">
    <property type="term" value="P:cardiac muscle cell action potential involved in contraction"/>
    <property type="evidence" value="ECO:0000318"/>
    <property type="project" value="GO_Central"/>
</dbReference>
<dbReference type="GO" id="GO:0007623">
    <property type="term" value="P:circadian rhythm"/>
    <property type="evidence" value="ECO:0007669"/>
    <property type="project" value="Ensembl"/>
</dbReference>
<dbReference type="GO" id="GO:0050974">
    <property type="term" value="P:detection of mechanical stimulus involved in sensory perception"/>
    <property type="evidence" value="ECO:0007669"/>
    <property type="project" value="Ensembl"/>
</dbReference>
<dbReference type="GO" id="GO:0050965">
    <property type="term" value="P:detection of temperature stimulus involved in sensory perception of pain"/>
    <property type="evidence" value="ECO:0007669"/>
    <property type="project" value="Ensembl"/>
</dbReference>
<dbReference type="GO" id="GO:0006954">
    <property type="term" value="P:inflammatory response"/>
    <property type="evidence" value="ECO:0007669"/>
    <property type="project" value="Ensembl"/>
</dbReference>
<dbReference type="GO" id="GO:0019228">
    <property type="term" value="P:neuronal action potential"/>
    <property type="evidence" value="ECO:0000314"/>
    <property type="project" value="UniProtKB"/>
</dbReference>
<dbReference type="GO" id="GO:0009791">
    <property type="term" value="P:post-embryonic development"/>
    <property type="evidence" value="ECO:0007669"/>
    <property type="project" value="Ensembl"/>
</dbReference>
<dbReference type="GO" id="GO:0009636">
    <property type="term" value="P:response to toxic substance"/>
    <property type="evidence" value="ECO:0007669"/>
    <property type="project" value="Ensembl"/>
</dbReference>
<dbReference type="GO" id="GO:0019233">
    <property type="term" value="P:sensory perception of pain"/>
    <property type="evidence" value="ECO:0000315"/>
    <property type="project" value="UniProtKB"/>
</dbReference>
<dbReference type="GO" id="GO:0035725">
    <property type="term" value="P:sodium ion transmembrane transport"/>
    <property type="evidence" value="ECO:0000318"/>
    <property type="project" value="GO_Central"/>
</dbReference>
<dbReference type="CDD" id="cd13433">
    <property type="entry name" value="Na_channel_gate"/>
    <property type="match status" value="1"/>
</dbReference>
<dbReference type="FunFam" id="1.10.238.10:FF:000002">
    <property type="entry name" value="Sodium channel protein"/>
    <property type="match status" value="1"/>
</dbReference>
<dbReference type="FunFam" id="1.10.287.70:FF:000001">
    <property type="entry name" value="Sodium channel protein"/>
    <property type="match status" value="1"/>
</dbReference>
<dbReference type="FunFam" id="1.10.287.70:FF:000006">
    <property type="entry name" value="Sodium channel protein"/>
    <property type="match status" value="1"/>
</dbReference>
<dbReference type="FunFam" id="1.20.120.350:FF:000002">
    <property type="entry name" value="Sodium channel protein"/>
    <property type="match status" value="1"/>
</dbReference>
<dbReference type="FunFam" id="1.20.120.350:FF:000004">
    <property type="entry name" value="Sodium channel protein"/>
    <property type="match status" value="1"/>
</dbReference>
<dbReference type="FunFam" id="1.20.120.350:FF:000005">
    <property type="entry name" value="Sodium channel protein"/>
    <property type="match status" value="1"/>
</dbReference>
<dbReference type="FunFam" id="1.20.5.1190:FF:000001">
    <property type="entry name" value="Sodium channel protein"/>
    <property type="match status" value="1"/>
</dbReference>
<dbReference type="FunFam" id="1.20.120.350:FF:000003">
    <property type="entry name" value="Voltage-dependent sodium channel"/>
    <property type="match status" value="1"/>
</dbReference>
<dbReference type="Gene3D" id="1.10.287.70">
    <property type="match status" value="4"/>
</dbReference>
<dbReference type="Gene3D" id="1.10.238.10">
    <property type="entry name" value="EF-hand"/>
    <property type="match status" value="1"/>
</dbReference>
<dbReference type="Gene3D" id="1.20.5.1190">
    <property type="entry name" value="iswi atpase"/>
    <property type="match status" value="1"/>
</dbReference>
<dbReference type="Gene3D" id="1.20.120.350">
    <property type="entry name" value="Voltage-gated potassium channels. Chain C"/>
    <property type="match status" value="4"/>
</dbReference>
<dbReference type="InterPro" id="IPR005821">
    <property type="entry name" value="Ion_trans_dom"/>
</dbReference>
<dbReference type="InterPro" id="IPR000048">
    <property type="entry name" value="IQ_motif_EF-hand-BS"/>
</dbReference>
<dbReference type="InterPro" id="IPR001696">
    <property type="entry name" value="Na_channel_asu"/>
</dbReference>
<dbReference type="InterPro" id="IPR044564">
    <property type="entry name" value="Na_chnl_inactivation_gate"/>
</dbReference>
<dbReference type="InterPro" id="IPR010526">
    <property type="entry name" value="Na_trans_assoc_dom"/>
</dbReference>
<dbReference type="InterPro" id="IPR024583">
    <property type="entry name" value="Na_trans_cytopl"/>
</dbReference>
<dbReference type="InterPro" id="IPR043203">
    <property type="entry name" value="VGCC_Ca_Na"/>
</dbReference>
<dbReference type="InterPro" id="IPR027359">
    <property type="entry name" value="Volt_channel_dom_sf"/>
</dbReference>
<dbReference type="PANTHER" id="PTHR10037:SF221">
    <property type="entry name" value="SODIUM CHANNEL PROTEIN TYPE 9 SUBUNIT ALPHA"/>
    <property type="match status" value="1"/>
</dbReference>
<dbReference type="PANTHER" id="PTHR10037">
    <property type="entry name" value="VOLTAGE-GATED CATION CHANNEL CALCIUM AND SODIUM"/>
    <property type="match status" value="1"/>
</dbReference>
<dbReference type="Pfam" id="PF00520">
    <property type="entry name" value="Ion_trans"/>
    <property type="match status" value="4"/>
</dbReference>
<dbReference type="Pfam" id="PF24609">
    <property type="entry name" value="IQ_SCN5A_C"/>
    <property type="match status" value="1"/>
</dbReference>
<dbReference type="Pfam" id="PF06512">
    <property type="entry name" value="Na_trans_assoc"/>
    <property type="match status" value="1"/>
</dbReference>
<dbReference type="Pfam" id="PF11933">
    <property type="entry name" value="Na_trans_cytopl"/>
    <property type="match status" value="1"/>
</dbReference>
<dbReference type="PRINTS" id="PR00170">
    <property type="entry name" value="NACHANNEL"/>
</dbReference>
<dbReference type="SMART" id="SM00015">
    <property type="entry name" value="IQ"/>
    <property type="match status" value="1"/>
</dbReference>
<dbReference type="SUPFAM" id="SSF81324">
    <property type="entry name" value="Voltage-gated potassium channels"/>
    <property type="match status" value="4"/>
</dbReference>
<reference key="1">
    <citation type="journal article" date="1995" name="EMBO J.">
        <title>Structure and functional expression of a new member of the tetrodotoxin-sensitive voltage-activated sodium channel family from human neuroendocrine cells.</title>
        <authorList>
            <person name="Klugbauer N."/>
            <person name="Lacinova L."/>
            <person name="Flockerzi V."/>
            <person name="Hofmann F."/>
        </authorList>
    </citation>
    <scope>NUCLEOTIDE SEQUENCE [MRNA] (ISOFORM 3)</scope>
    <scope>FUNCTION IN VOLTAGE-EVOKED DEPOLARIZATION</scope>
    <scope>TRANSPORTER ACTIVITY</scope>
    <scope>ACTIVITY REGULATION</scope>
    <scope>SUBCELLULAR LOCATION</scope>
    <scope>SUBUNIT</scope>
    <scope>TISSUE SPECIFICITY</scope>
    <scope>VARIANT ARG-1161</scope>
    <source>
        <tissue>Thyroid</tissue>
    </source>
</reference>
<reference key="2">
    <citation type="journal article" date="2006" name="Nature">
        <title>An SCN9A channelopathy causes congenital inability to experience pain.</title>
        <authorList>
            <person name="Cox J.J."/>
            <person name="Reimann F."/>
            <person name="Nicholas A.K."/>
            <person name="Thornton G."/>
            <person name="Roberts E."/>
            <person name="Springell K."/>
            <person name="Karbani G."/>
            <person name="Jafri H."/>
            <person name="Mannan J."/>
            <person name="Raashid Y."/>
            <person name="Al-Gazali L."/>
            <person name="Hamamy H."/>
            <person name="Valente E.M."/>
            <person name="Gorman S."/>
            <person name="Williams R."/>
            <person name="McHale D.P."/>
            <person name="Wood J.N."/>
            <person name="Gribble F.M."/>
            <person name="Woods C.G."/>
        </authorList>
    </citation>
    <scope>NUCLEOTIDE SEQUENCE [MRNA] (ISOFORM 3)</scope>
    <scope>INVOLVEMENT IN CONGENITAL INSENSITIVITY TO PAIN</scope>
    <scope>FUNCTION</scope>
    <scope>SUBCELLULAR LOCATION</scope>
    <scope>SUBUNIT</scope>
    <scope>VARIANT ARG-1161</scope>
</reference>
<reference key="3">
    <citation type="journal article" date="2005" name="Nature">
        <title>Generation and annotation of the DNA sequences of human chromosomes 2 and 4.</title>
        <authorList>
            <person name="Hillier L.W."/>
            <person name="Graves T.A."/>
            <person name="Fulton R.S."/>
            <person name="Fulton L.A."/>
            <person name="Pepin K.H."/>
            <person name="Minx P."/>
            <person name="Wagner-McPherson C."/>
            <person name="Layman D."/>
            <person name="Wylie K."/>
            <person name="Sekhon M."/>
            <person name="Becker M.C."/>
            <person name="Fewell G.A."/>
            <person name="Delehaunty K.D."/>
            <person name="Miner T.L."/>
            <person name="Nash W.E."/>
            <person name="Kremitzki C."/>
            <person name="Oddy L."/>
            <person name="Du H."/>
            <person name="Sun H."/>
            <person name="Bradshaw-Cordum H."/>
            <person name="Ali J."/>
            <person name="Carter J."/>
            <person name="Cordes M."/>
            <person name="Harris A."/>
            <person name="Isak A."/>
            <person name="van Brunt A."/>
            <person name="Nguyen C."/>
            <person name="Du F."/>
            <person name="Courtney L."/>
            <person name="Kalicki J."/>
            <person name="Ozersky P."/>
            <person name="Abbott S."/>
            <person name="Armstrong J."/>
            <person name="Belter E.A."/>
            <person name="Caruso L."/>
            <person name="Cedroni M."/>
            <person name="Cotton M."/>
            <person name="Davidson T."/>
            <person name="Desai A."/>
            <person name="Elliott G."/>
            <person name="Erb T."/>
            <person name="Fronick C."/>
            <person name="Gaige T."/>
            <person name="Haakenson W."/>
            <person name="Haglund K."/>
            <person name="Holmes A."/>
            <person name="Harkins R."/>
            <person name="Kim K."/>
            <person name="Kruchowski S.S."/>
            <person name="Strong C.M."/>
            <person name="Grewal N."/>
            <person name="Goyea E."/>
            <person name="Hou S."/>
            <person name="Levy A."/>
            <person name="Martinka S."/>
            <person name="Mead K."/>
            <person name="McLellan M.D."/>
            <person name="Meyer R."/>
            <person name="Randall-Maher J."/>
            <person name="Tomlinson C."/>
            <person name="Dauphin-Kohlberg S."/>
            <person name="Kozlowicz-Reilly A."/>
            <person name="Shah N."/>
            <person name="Swearengen-Shahid S."/>
            <person name="Snider J."/>
            <person name="Strong J.T."/>
            <person name="Thompson J."/>
            <person name="Yoakum M."/>
            <person name="Leonard S."/>
            <person name="Pearman C."/>
            <person name="Trani L."/>
            <person name="Radionenko M."/>
            <person name="Waligorski J.E."/>
            <person name="Wang C."/>
            <person name="Rock S.M."/>
            <person name="Tin-Wollam A.-M."/>
            <person name="Maupin R."/>
            <person name="Latreille P."/>
            <person name="Wendl M.C."/>
            <person name="Yang S.-P."/>
            <person name="Pohl C."/>
            <person name="Wallis J.W."/>
            <person name="Spieth J."/>
            <person name="Bieri T.A."/>
            <person name="Berkowicz N."/>
            <person name="Nelson J.O."/>
            <person name="Osborne J."/>
            <person name="Ding L."/>
            <person name="Meyer R."/>
            <person name="Sabo A."/>
            <person name="Shotland Y."/>
            <person name="Sinha P."/>
            <person name="Wohldmann P.E."/>
            <person name="Cook L.L."/>
            <person name="Hickenbotham M.T."/>
            <person name="Eldred J."/>
            <person name="Williams D."/>
            <person name="Jones T.A."/>
            <person name="She X."/>
            <person name="Ciccarelli F.D."/>
            <person name="Izaurralde E."/>
            <person name="Taylor J."/>
            <person name="Schmutz J."/>
            <person name="Myers R.M."/>
            <person name="Cox D.R."/>
            <person name="Huang X."/>
            <person name="McPherson J.D."/>
            <person name="Mardis E.R."/>
            <person name="Clifton S.W."/>
            <person name="Warren W.C."/>
            <person name="Chinwalla A.T."/>
            <person name="Eddy S.R."/>
            <person name="Marra M.A."/>
            <person name="Ovcharenko I."/>
            <person name="Furey T.S."/>
            <person name="Miller W."/>
            <person name="Eichler E.E."/>
            <person name="Bork P."/>
            <person name="Suyama M."/>
            <person name="Torrents D."/>
            <person name="Waterston R.H."/>
            <person name="Wilson R.K."/>
        </authorList>
    </citation>
    <scope>NUCLEOTIDE SEQUENCE [LARGE SCALE GENOMIC DNA]</scope>
</reference>
<reference key="4">
    <citation type="journal article" date="2004" name="J. Biol. Chem.">
        <title>Expression of alternatively spliced sodium channel alpha-subunit genes: unique splicing patterns are observed in dorsal root ganglia.</title>
        <authorList>
            <person name="Raymond C.K."/>
            <person name="Castle J.C."/>
            <person name="Garrett-Engele P.W."/>
            <person name="Armour C.D."/>
            <person name="Kan Z.G."/>
            <person name="Tsinoremas N.T."/>
            <person name="Johnson J.M."/>
        </authorList>
    </citation>
    <scope>NUCLEOTIDE SEQUENCE [MRNA] OF 136-674 (ISOFORMS 1; 2; 3 AND 4)</scope>
    <scope>TISSUE SPECIFICITY</scope>
    <source>
        <tissue>Spinal ganglion</tissue>
    </source>
</reference>
<reference key="5">
    <citation type="submission" date="2001-04" db="EMBL/GenBank/DDBJ databases">
        <title>Upregulation of voltage-gated Na+ channel expression and metastatic potential in human breast cancer: correlative studies on cell lines and biopsy tissues.</title>
        <authorList>
            <person name="Diss J.K.J."/>
            <person name="Fraser S.P."/>
            <person name="Coombes R.C."/>
            <person name="Djamgoz M.B.A."/>
        </authorList>
    </citation>
    <scope>NUCLEOTIDE SEQUENCE [MRNA] OF 150-264 AND 1340-1400</scope>
</reference>
<reference key="6">
    <citation type="journal article" date="2004" name="J. Med. Genet.">
        <title>Mutations in SCN9A, encoding a sodium channel alpha subunit, in patients with primary erythermalgia.</title>
        <authorList>
            <person name="Yang Y."/>
            <person name="Wang Y."/>
            <person name="Li S."/>
            <person name="Xu Z."/>
            <person name="Li H."/>
            <person name="Ma L."/>
            <person name="Fan J."/>
            <person name="Bu D."/>
            <person name="Liu B."/>
            <person name="Fan Z."/>
            <person name="Wu G."/>
            <person name="Jin J."/>
            <person name="Ding B."/>
            <person name="Zhu X."/>
            <person name="Shen Y."/>
        </authorList>
    </citation>
    <scope>NUCLEOTIDE SEQUENCE [GENOMIC DNA] OF 840-958</scope>
    <scope>VARIANTS PERYTHM THR-859 AND HIS-869</scope>
</reference>
<reference key="7">
    <citation type="journal article" date="1997" name="J. Biol. Chem.">
        <title>A novel tetrodotoxin-sensitive, voltage-gated sodium channel expressed in rat and human dorsal root ganglia.</title>
        <authorList>
            <person name="Sangameswaran L."/>
            <person name="Fish L.M."/>
            <person name="Koch B.D."/>
            <person name="Rabert D.K."/>
            <person name="Delgado S.G."/>
            <person name="Ilnicka M."/>
            <person name="Jakeman L.B."/>
            <person name="Novakovic S."/>
            <person name="Wong K."/>
            <person name="Sze P."/>
            <person name="Tzoumaka E."/>
            <person name="Stewart G.R."/>
            <person name="Herman R.C."/>
            <person name="Chan H."/>
            <person name="Eglen R.M."/>
            <person name="Hunter J.C."/>
        </authorList>
    </citation>
    <scope>TISSUE SPECIFICITY</scope>
</reference>
<reference key="8">
    <citation type="journal article" date="2004" name="FEBS Lett.">
        <title>Voltage-gated sodium channel expressed in cultured human smooth muscle cells: involvement of SCN9A.</title>
        <authorList>
            <person name="Jo T."/>
            <person name="Nagata T."/>
            <person name="Iida H."/>
            <person name="Imuta H."/>
            <person name="Iwasawa K."/>
            <person name="Ma J."/>
            <person name="Hara K."/>
            <person name="Omata M."/>
            <person name="Nagai R."/>
            <person name="Takizawa H."/>
            <person name="Nagase T."/>
            <person name="Nakajima T."/>
        </authorList>
    </citation>
    <scope>FUNCTION IN VOLTAGE-EVOKED DEPOLARIZATION</scope>
    <scope>TISSUE SPECIFICITY</scope>
</reference>
<reference key="9">
    <citation type="journal article" date="2010" name="Mol. Pharmacol.">
        <title>The tarantula toxins ProTx-II and huwentoxin-IV differentially interact with human Nav1.7 voltage sensors to inhibit channel activation and inactivation.</title>
        <authorList>
            <person name="Xiao Y."/>
            <person name="Blumenthal K."/>
            <person name="Jackson J.O. II"/>
            <person name="Liang S."/>
            <person name="Cummins T.R."/>
        </authorList>
    </citation>
    <scope>ACTIVITY REGULATION</scope>
    <scope>MUTAGENESIS OF GLU-829</scope>
</reference>
<reference key="10">
    <citation type="journal article" date="2011" name="J. Biol. Chem.">
        <title>Common molecular determinants of tarantula huwentoxin-IV inhibition of Na+ channel voltage sensors in domains II and IV.</title>
        <authorList>
            <person name="Xiao Y."/>
            <person name="Jackson J.O. II"/>
            <person name="Liang S."/>
            <person name="Cummins T.R."/>
        </authorList>
    </citation>
    <scope>ACTIVITY REGULATION</scope>
    <scope>MUTAGENESIS OF GLU-764; GLU-822; LEU-825 AND ASP-827</scope>
</reference>
<reference key="11">
    <citation type="journal article" date="2011" name="PLoS ONE">
        <title>Isolation and characterization of CvIV4: a pain inducing alpha-scorpion toxin.</title>
        <authorList>
            <person name="Rowe A.H."/>
            <person name="Xiao Y."/>
            <person name="Scales J."/>
            <person name="Linse K.D."/>
            <person name="Rowe M.P."/>
            <person name="Cummins T.R."/>
            <person name="Zakon H.H."/>
        </authorList>
    </citation>
    <scope>ACTIVITY REGULATION</scope>
    <scope>MUTAGENESIS OF ASP-1597 AND GLU-1600</scope>
</reference>
<reference key="12">
    <citation type="journal article" date="2012" name="Proc. Natl. Acad. Sci. U.S.A.">
        <title>Marked difference in saxitoxin and tetrodotoxin affinity for the human nociceptive voltage-gated sodium channel (Nav1.7) [corrected].</title>
        <authorList>
            <person name="Walker J.R."/>
            <person name="Novick P.A."/>
            <person name="Parsons W.H."/>
            <person name="McGregor M."/>
            <person name="Zablocki J."/>
            <person name="Pande V.S."/>
            <person name="Du Bois J."/>
        </authorList>
    </citation>
    <scope>FUNCTION</scope>
    <scope>ACTIVITY REGULATION</scope>
    <scope>MUTAGENESIS OF 1409-THR-ILE-1410</scope>
</reference>
<reference key="13">
    <citation type="journal article" date="2012" name="Proc. Natl. Acad. Sci. U.S.A.">
        <authorList>
            <person name="Walker J.R."/>
            <person name="Novick P.A."/>
            <person name="Parsons W.H."/>
            <person name="McGregor M."/>
            <person name="Zablocki J."/>
            <person name="Pande V.S."/>
            <person name="Du Bois J."/>
        </authorList>
    </citation>
    <scope>ERRATUM OF PUBMED:23077250</scope>
</reference>
<reference key="14">
    <citation type="journal article" date="2014" name="FEBS Lett.">
        <title>Protein kinase C enhances human sodium channel hNav1.7 resurgent currents via a serine residue in the domain III-IV linker.</title>
        <authorList>
            <person name="Tan Z.Y."/>
            <person name="Priest B.T."/>
            <person name="Krajewski J.L."/>
            <person name="Knopp K.L."/>
            <person name="Nisenbaum E.S."/>
            <person name="Cummins T.R."/>
        </authorList>
    </citation>
    <scope>FUNCTION</scope>
    <scope>SUBCELLULAR LOCATION</scope>
    <scope>SUBUNIT</scope>
    <scope>PHOSPHORYLATION AT SER-1490</scope>
    <scope>MUTAGENESIS OF SER-1490</scope>
</reference>
<reference key="15">
    <citation type="journal article" date="2014" name="Proc. Natl. Acad. Sci. U.S.A.">
        <title>A disulfide tether stabilizes the block of sodium channels by the conotoxin muO[section sign]-GVIIJ.</title>
        <authorList>
            <person name="Gajewiak J."/>
            <person name="Azam L."/>
            <person name="Imperial J."/>
            <person name="Walewska A."/>
            <person name="Green B.R."/>
            <person name="Bandyopadhyay P.K."/>
            <person name="Raghuraman S."/>
            <person name="Ueberheide B."/>
            <person name="Bern M."/>
            <person name="Zhou H.M."/>
            <person name="Minassian N.A."/>
            <person name="Hagan R.H."/>
            <person name="Flinspach M."/>
            <person name="Liu Y."/>
            <person name="Bulaj G."/>
            <person name="Wickenden A.D."/>
            <person name="Olivera B.M."/>
            <person name="Yoshikami D."/>
            <person name="Zhang M.M."/>
        </authorList>
    </citation>
    <scope>ACTIVITY REGULATION</scope>
</reference>
<reference key="16">
    <citation type="journal article" date="2017" name="Sci. Rep.">
        <title>The tarantula toxin beta/delta-TRTX-Pre1a highlights the importance of the S1-S2 voltage-sensor region for sodium channel subtype selectivity.</title>
        <authorList>
            <person name="Wingerd J.S."/>
            <person name="Mozar C.A."/>
            <person name="Ussing C.A."/>
            <person name="Murali S.S."/>
            <person name="Chin Y.K."/>
            <person name="Cristofori-Armstrong B."/>
            <person name="Durek T."/>
            <person name="Gilchrist J."/>
            <person name="Vaughan C.W."/>
            <person name="Bosmans F."/>
            <person name="Adams D.J."/>
            <person name="Lewis R.J."/>
            <person name="Alewood P.F."/>
            <person name="Mobli M."/>
            <person name="Christie M.J."/>
            <person name="Rash L.D."/>
        </authorList>
    </citation>
    <scope>ACTIVITY REGULATION</scope>
</reference>
<reference key="17">
    <citation type="journal article" date="2019" name="Bioconj. Chem.">
        <title>Fluorescence imaging of peripheral nerves by a Nav1.7-targeted inhibitor cystine knot peptide.</title>
        <authorList>
            <person name="Gonzales J."/>
            <person name="Demetrio de Souza Franca P."/>
            <person name="Jiang Y."/>
            <person name="Pirovano G."/>
            <person name="Kossatz S."/>
            <person name="Guru N."/>
            <person name="Yarilin D."/>
            <person name="Agwa A.J."/>
            <person name="Schroeder C.I."/>
            <person name="Patel S.G."/>
            <person name="Ganly I."/>
            <person name="King G.F."/>
            <person name="Reiner T."/>
        </authorList>
    </citation>
    <scope>TISSUE SPECIFICITY</scope>
</reference>
<reference key="18">
    <citation type="journal article" date="2023" name="Nat. Commun.">
        <title>Pain-causing stinging nettle toxins target TMEM233 to modulate NaV1.7 function.</title>
        <authorList>
            <person name="Jami S."/>
            <person name="Deuis J.R."/>
            <person name="Klasfauseweh T."/>
            <person name="Cheng X."/>
            <person name="Kurdyukov S."/>
            <person name="Chung F."/>
            <person name="Okorokov A.L."/>
            <person name="Li S."/>
            <person name="Zhang J."/>
            <person name="Cristofori-Armstrong B."/>
            <person name="Israel M.R."/>
            <person name="Ju R.J."/>
            <person name="Robinson S.D."/>
            <person name="Zhao P."/>
            <person name="Ragnarsson L."/>
            <person name="Andersson A."/>
            <person name="Tran P."/>
            <person name="Schendel V."/>
            <person name="McMahon K.L."/>
            <person name="Tran H.N.T."/>
            <person name="Chin Y.K."/>
            <person name="Zhu Y."/>
            <person name="Liu J."/>
            <person name="Crawford T."/>
            <person name="Purushothamvasan S."/>
            <person name="Habib A.M."/>
            <person name="Andersson D.A."/>
            <person name="Rash L.D."/>
            <person name="Wood J.N."/>
            <person name="Zhao J."/>
            <person name="Stehbens S.J."/>
            <person name="Mobli M."/>
            <person name="Leffler A."/>
            <person name="Jiang D."/>
            <person name="Cox J.J."/>
            <person name="Waxman S.G."/>
            <person name="Dib-Hajj S.D."/>
            <person name="Gregory Neely G."/>
            <person name="Durek T."/>
            <person name="Vetter I."/>
        </authorList>
    </citation>
    <scope>INTERACTION WITH TMEM233</scope>
</reference>
<reference key="19">
    <citation type="journal article" date="2019" name="Neuron">
        <title>Defining the Functional Role of NaV1.7 in Human Nociception.</title>
        <authorList>
            <person name="McDermott L.A."/>
            <person name="Weir G.A."/>
            <person name="Themistocleous A.C."/>
            <person name="Segerdahl A.R."/>
            <person name="Blesneac I."/>
            <person name="Baskozos G."/>
            <person name="Clark A.J."/>
            <person name="Millar V."/>
            <person name="Peck L.J."/>
            <person name="Ebner D."/>
            <person name="Tracey I."/>
            <person name="Serra J."/>
            <person name="Bennett D.L."/>
        </authorList>
    </citation>
    <scope>FUNCTION</scope>
    <scope>SUBCELLULAR LOCATION</scope>
</reference>
<reference evidence="49" key="20">
    <citation type="journal article" date="2015" name="Science">
        <title>Structural basis of Nav1.7 inhibition by an isoform-selective small-molecule antagonist.</title>
        <authorList>
            <person name="Ahuja S."/>
            <person name="Mukund S."/>
            <person name="Deng L."/>
            <person name="Khakh K."/>
            <person name="Chang E."/>
            <person name="Ho H."/>
            <person name="Shriver S."/>
            <person name="Young C."/>
            <person name="Lin S."/>
            <person name="Johnson J.P. Jr."/>
            <person name="Wu P."/>
            <person name="Li J."/>
            <person name="Coons M."/>
            <person name="Tam C."/>
            <person name="Brillantes B."/>
            <person name="Sampang H."/>
            <person name="Mortara K."/>
            <person name="Bowman K.K."/>
            <person name="Clark K.R."/>
            <person name="Estevez A."/>
            <person name="Xie Z."/>
            <person name="Verschoof H."/>
            <person name="Grimwood M."/>
            <person name="Dehnhardt C."/>
            <person name="Andrez J.C."/>
            <person name="Focken T."/>
            <person name="Sutherlin D.P."/>
            <person name="Safina B.S."/>
            <person name="Starovasnik M.A."/>
            <person name="Ortwine D.F."/>
            <person name="Franke Y."/>
            <person name="Cohen C.J."/>
            <person name="Hackos D.H."/>
            <person name="Koth C.M."/>
            <person name="Payandeh J."/>
        </authorList>
    </citation>
    <scope>X-RAY CRYSTALLOGRAPHY (3.53 ANGSTROMS) OF 1527-1559 AND 1581-1622</scope>
    <scope>FUNCTION</scope>
    <scope>SUBCELLULAR LOCATION</scope>
    <scope>DOMAIN</scope>
</reference>
<reference evidence="54 55" key="21">
    <citation type="journal article" date="2019" name="Cell">
        <title>Structural basis of Nav1.7 inhibition by a gating-modifier spider toxin.</title>
        <authorList>
            <person name="Xu H."/>
            <person name="Li T."/>
            <person name="Rohou A."/>
            <person name="Arthur C.P."/>
            <person name="Tzakoniati F."/>
            <person name="Wong E."/>
            <person name="Estevez A."/>
            <person name="Kugel C."/>
            <person name="Franke Y."/>
            <person name="Chen J."/>
            <person name="Ciferri C."/>
            <person name="Hackos D.H."/>
            <person name="Koth C.M."/>
            <person name="Payandeh J."/>
        </authorList>
    </citation>
    <scope>STRUCTURE BY ELECTRON MICROSCOPY (3.60 ANGSTROMS) OF 758-788 AND 813-843 IN COMPLEX WITH THE SPIDER PROTOXIN-II</scope>
    <scope>TRANSPORTER ACTIVITY</scope>
    <scope>ACTIVITY REGULATION</scope>
    <scope>MUTAGENESIS OF ILE-778; LEU-823; PHE-824; LEU-825; ALA-826 AND ASP-827</scope>
</reference>
<reference evidence="56 57" key="22">
    <citation type="journal article" date="2019" name="Science">
        <title>Structural basis of alpha-scorpion toxin action on Nav channels.</title>
        <authorList>
            <person name="Clairfeuille T."/>
            <person name="Cloake A."/>
            <person name="Infield D.T."/>
            <person name="Llongueras J.P."/>
            <person name="Arthur C.P."/>
            <person name="Li Z.R."/>
            <person name="Jian Y."/>
            <person name="Martin-Eauclaire M.F."/>
            <person name="Bougis P.E."/>
            <person name="Ciferri C."/>
            <person name="Ahern C.A."/>
            <person name="Bosmans F."/>
            <person name="Hackos D.H."/>
            <person name="Rohou A."/>
            <person name="Payandeh J."/>
        </authorList>
    </citation>
    <scope>STRUCTURE BY ELECTRON MICROSCOPY (3.40 ANGSTROMS) OF 1501-1631 IN COMPLEX WITH THE SCORPION ALPHA-TOXIN AAH2</scope>
    <scope>ACTIVITY REGULATION</scope>
    <scope>MUTAGENESIS OF ASP-1597</scope>
</reference>
<reference evidence="50 51 52 53" key="23">
    <citation type="journal article" date="2019" name="Science">
        <title>Structures of human Nav1.7 channel in complex with auxiliary subunits and animal toxins.</title>
        <authorList>
            <person name="Shen H."/>
            <person name="Liu D."/>
            <person name="Wu K."/>
            <person name="Lei J."/>
            <person name="Yan N."/>
        </authorList>
    </citation>
    <scope>STRUCTURE BY ELECTRON MICROSCOPY (3.2 ANGSTROMS) OF MUTANT LYS-406 IN COMPLEX WITH SCN1B; SCN2B; PROTOTOXIN-II; TETRODOTOXIN; HUWENTOXIN-IV AND SAXITOXIN</scope>
    <scope>GLYCOSYLATION AT ASN-283; ASN-1352; ASN-1366 AND ASN-1375</scope>
    <scope>SUBUNIT</scope>
    <scope>TOPOLOGY</scope>
    <scope>DISULFIDE BOND</scope>
    <scope>MUTAGENESIS OF GLU-406</scope>
</reference>
<reference key="24">
    <citation type="journal article" date="2004" name="J. Neurosci.">
        <title>Electrophysiological properties of mutant Nav1.7 sodium channels in a painful inherited neuropathy.</title>
        <authorList>
            <person name="Cummins T.R."/>
            <person name="Dib-Hajj S.D."/>
            <person name="Waxman S.G."/>
        </authorList>
    </citation>
    <scope>CHARACTERIZATION OF VARIANTS PERYTHM THR-859 AND HIS-869</scope>
    <scope>FUNCTION</scope>
    <scope>SUBCELLULAR LOCATION</scope>
</reference>
<reference key="25">
    <citation type="journal article" date="2005" name="Arch. Neurol.">
        <title>Autosomal dominant erythermalgia associated with a novel mutation in the voltage-gated sodium channel alpha subunit Nav1.7.</title>
        <authorList>
            <person name="Michiels J.J."/>
            <person name="te Morsche R.H.M."/>
            <person name="Jansen J.B.M.J."/>
            <person name="Drenth J.P.H."/>
        </authorList>
    </citation>
    <scope>VARIANT PERYTHM THR-241</scope>
</reference>
<reference key="26">
    <citation type="journal article" date="2005" name="Brain">
        <title>Gain-of-function mutation in Nav1.7 in familial erythromelalgia induces bursting of sensory neurons.</title>
        <authorList>
            <person name="Dib-Hajj S.D."/>
            <person name="Rush A.M."/>
            <person name="Cummins T.R."/>
            <person name="Hisama F.M."/>
            <person name="Novella S."/>
            <person name="Tyrrell L."/>
            <person name="Marshall L."/>
            <person name="Waxman S.G."/>
        </authorList>
    </citation>
    <scope>VARIANT PERYTHM VAL-1460</scope>
    <scope>CHARACTERIZATION OF VARIANT PERYTHM VAL-1460</scope>
</reference>
<reference key="27">
    <citation type="journal article" date="2005" name="J. Invest. Dermatol.">
        <title>SCN9A mutations define primary erythermalgia as a neuropathic disorder of voltage gated sodium channels.</title>
        <authorList>
            <person name="Drenth J.P."/>
            <person name="te Morsche R.H."/>
            <person name="Guillet G."/>
            <person name="Taieb A."/>
            <person name="Kirby R.L."/>
            <person name="Jansen J.B."/>
        </authorList>
    </citation>
    <scope>VARIANTS PERYTHM SER-216; LYS-395; THR-859 AND PHE-869</scope>
    <scope>VARIANT ARG-1161</scope>
</reference>
<reference key="28">
    <citation type="journal article" date="2006" name="Ann. Neurol.">
        <title>Sporadic onset of erythermalgia: a gain-of-function mutation in Nav1.7.</title>
        <authorList>
            <person name="Han C."/>
            <person name="Rush A.M."/>
            <person name="Dib-Hajj S.D."/>
            <person name="Li S."/>
            <person name="Xu Z."/>
            <person name="Wang Y."/>
            <person name="Tyrrell L."/>
            <person name="Wang X."/>
            <person name="Yang Y."/>
            <person name="Waxman S.G."/>
        </authorList>
    </citation>
    <scope>VARIANT PERYTHM PHE-869</scope>
    <scope>CHARACTERIZATION OF VARIANT PERYTHM PHE-869</scope>
</reference>
<reference key="29">
    <citation type="journal article" date="2006" name="Neurology">
        <title>Inherited erythermalgia: limb pain from an S4 charge-neutral Na channelopathy.</title>
        <authorList>
            <person name="Choi J.S."/>
            <person name="Dib-Hajj S.D."/>
            <person name="Waxman S.G."/>
        </authorList>
    </citation>
    <scope>CHARACTERIZATION OF VARIANT PERYTHM SER-216</scope>
    <scope>FUNCTION</scope>
    <scope>SUBCELLULAR LOCATION</scope>
</reference>
<reference key="30">
    <citation type="journal article" date="2006" name="Neuron">
        <title>SCN9A mutations in paroxysmal extreme pain disorder: allelic variants underlie distinct channel defects and phenotypes.</title>
        <authorList>
            <person name="Fertleman C.R."/>
            <person name="Baker M.D."/>
            <person name="Parker K.A."/>
            <person name="Moffatt S."/>
            <person name="Elmslie F.V."/>
            <person name="Abrahamsen B."/>
            <person name="Ostman J."/>
            <person name="Klugbauer N."/>
            <person name="Wood J.N."/>
            <person name="Gardiner R.M."/>
            <person name="Rees M."/>
        </authorList>
    </citation>
    <scope>VARIANTS PEXPD CYS-1007; PHE-1309; ASP-1309; PHE-1310; THR-1472; VAL-1473; ILE-1475 AND LYS-1638</scope>
    <scope>CHARACTERIZATION OF VARIANTS PEXPD THR-1472; ILE-1475 AND LYS-1638</scope>
    <scope>FUNCTION</scope>
</reference>
<reference key="31">
    <citation type="journal article" date="2006" name="Proc. Natl. Acad. Sci. U.S.A.">
        <title>A single sodium channel mutation produces hyper- or hypoexcitability in different types of neurons.</title>
        <authorList>
            <person name="Rush A.M."/>
            <person name="Dib-Hajj S.D."/>
            <person name="Liu S."/>
            <person name="Cummins T.R."/>
            <person name="Black J.A."/>
            <person name="Waxman S.G."/>
        </authorList>
    </citation>
    <scope>CHARACTERIZATION OF VARIANT PERYTHM HIS-869</scope>
</reference>
<reference key="32">
    <citation type="journal article" date="2008" name="J. Neurosci.">
        <title>NaV1.7 gain-of-function mutations as a continuum: A1632E displays physiological changes associated with erythromelalgia and paroxysmal extreme pain disorder mutations and produces symptoms of both disorders.</title>
        <authorList>
            <person name="Estacion M."/>
            <person name="Dib-Hajj S.D."/>
            <person name="Benke P.J."/>
            <person name="Te Morsche R.H."/>
            <person name="Eastman E.M."/>
            <person name="Macala L.J."/>
            <person name="Drenth J.P."/>
            <person name="Waxman S.G."/>
        </authorList>
    </citation>
    <scope>VARIANT PERYTHM GLU-1643</scope>
    <scope>CHARACTERIZATION OF VARIANT PERYTHM GLU-1643</scope>
    <scope>VARIANT PEXPD GLU-1643</scope>
    <scope>CHARACTERIZATION OF VARIANT PEXPD GLU-1643</scope>
</reference>
<reference key="33">
    <citation type="journal article" date="2009" name="Brain">
        <title>Early- and late-onset inherited erythromelalgia: genotype-phenotype correlation.</title>
        <authorList>
            <person name="Han C."/>
            <person name="Dib-Hajj S.D."/>
            <person name="Lin Z."/>
            <person name="Li Y."/>
            <person name="Eastman E.M."/>
            <person name="Tyrrell L."/>
            <person name="Cao X."/>
            <person name="Yang Y."/>
            <person name="Waxman S.G."/>
        </authorList>
    </citation>
    <scope>VARIANT PERYTHM ARG-10</scope>
    <scope>CHARACTERIZATION OF VARIANTS PERYTHM ARG-10 AND THR-859</scope>
    <scope>FUNCTION</scope>
    <scope>SUBCELLULAR LOCATION</scope>
</reference>
<reference key="34">
    <citation type="journal article" date="2009" name="PLoS Genet.">
        <title>A role of SCN9A in human epilepsies, as a cause of febrile seizures and as a potential modifier of Dravet syndrome.</title>
        <authorList>
            <person name="Singh N.A."/>
            <person name="Pappas C."/>
            <person name="Dahle E.J."/>
            <person name="Claes L.R."/>
            <person name="Pruess T.H."/>
            <person name="De Jonghe P."/>
            <person name="Thompson J."/>
            <person name="Dixon M."/>
            <person name="Gurnett C."/>
            <person name="Peiffer A."/>
            <person name="White H.S."/>
            <person name="Filloux F."/>
            <person name="Leppert M.F."/>
        </authorList>
    </citation>
    <scope>VARIANTS VAL-62; GLN-149; MET-228; ASN-490; LYS-519; TYR-641; ARG-666; MET-695; TYR-710; VAL-750; PHE-1134; GLN-1171 AND VAL-1278</scope>
</reference>
<reference key="35">
    <citation type="journal article" date="2010" name="Hum. Mutat.">
        <title>Congenital insensitivity to pain: novel SCN9A missense and in-frame deletion mutations.</title>
        <authorList>
            <person name="Cox J.J."/>
            <person name="Sheynin J."/>
            <person name="Shorer Z."/>
            <person name="Reimann F."/>
            <person name="Nicholas A.K."/>
            <person name="Zubovic L."/>
            <person name="Baralle M."/>
            <person name="Wraige E."/>
            <person name="Manor E."/>
            <person name="Levy J."/>
            <person name="Woods C.G."/>
            <person name="Parvari R."/>
        </authorList>
    </citation>
    <scope>VARIANTS CIP GLN-907 AND 1381-ARG--LEU-1385 DEL</scope>
    <scope>CHARACTERIZATION OF VARIANTS CIP GLN-907 AND 1381-ARG--LEU-1385 DEL</scope>
</reference>
<reference key="36">
    <citation type="journal article" date="2015" name="Anesthesiology">
        <title>p.L1612P, a novel voltage-gated sodium channel Nav1.7 mutation inducing a cold sensitive paroxysmal extreme pain disorder.</title>
        <authorList>
            <person name="Suter M.R."/>
            <person name="Bhuiyan Z.A."/>
            <person name="Laedermann C.J."/>
            <person name="Kuntzer T."/>
            <person name="Schaller M."/>
            <person name="Stauffacher M.W."/>
            <person name="Roulet E."/>
            <person name="Abriel H."/>
            <person name="Decosterd I."/>
            <person name="Wider C."/>
        </authorList>
    </citation>
    <scope>VARIANT PEXPD PRO-1623</scope>
    <scope>CHARACTERIZATION OF VARIANT PEXPD PRO-1623</scope>
</reference>
<reference key="37">
    <citation type="journal article" date="2014" name="J. Biol. Chem.">
        <title>Inherited pain: sodium channel Nav1.7 A1632T mutation causes erythromelalgia due to a shift of fast inactivation.</title>
        <authorList>
            <person name="Eberhardt M."/>
            <person name="Nakajima J."/>
            <person name="Klinger A.B."/>
            <person name="Neacsu C."/>
            <person name="Huhne K."/>
            <person name="O'Reilly A.O."/>
            <person name="Kist A.M."/>
            <person name="Lampe A.K."/>
            <person name="Fischer K."/>
            <person name="Gibson J."/>
            <person name="Nau C."/>
            <person name="Winterpacht A."/>
            <person name="Lampert A."/>
        </authorList>
    </citation>
    <scope>VARIANT PERYTHM THR-1643</scope>
    <scope>CHARACTERIZATION OF VARIANT PERYTHM THR-1643</scope>
    <scope>MUTAGENESIS OF ALA-1643</scope>
    <scope>FUNCTION</scope>
    <scope>SUBCELLULAR LOCATION</scope>
</reference>
<reference key="38">
    <citation type="journal article" date="2020" name="PLoS Genet.">
        <title>No association between SCN9A and monogenic human epilepsy disorders.</title>
        <authorList>
            <person name="Fasham J."/>
            <person name="Leslie J.S."/>
            <person name="Harrison J.W."/>
            <person name="Deline J."/>
            <person name="Williams K.B."/>
            <person name="Kuhl A."/>
            <person name="Scott Schwoerer J."/>
            <person name="Cross H.E."/>
            <person name="Crosby A.H."/>
            <person name="Baple E.L."/>
        </authorList>
    </citation>
    <scope>LACK OF INVOLVEMENT IN EPILEPSY AND FEBRILE SEIZURES</scope>
    <scope>VARIANT TYR-641</scope>
</reference>
<gene>
    <name evidence="48" type="primary">SCN9A</name>
    <name type="synonym">NENA</name>
</gene>
<organism>
    <name type="scientific">Homo sapiens</name>
    <name type="common">Human</name>
    <dbReference type="NCBI Taxonomy" id="9606"/>
    <lineage>
        <taxon>Eukaryota</taxon>
        <taxon>Metazoa</taxon>
        <taxon>Chordata</taxon>
        <taxon>Craniata</taxon>
        <taxon>Vertebrata</taxon>
        <taxon>Euteleostomi</taxon>
        <taxon>Mammalia</taxon>
        <taxon>Eutheria</taxon>
        <taxon>Euarchontoglires</taxon>
        <taxon>Primates</taxon>
        <taxon>Haplorrhini</taxon>
        <taxon>Catarrhini</taxon>
        <taxon>Hominidae</taxon>
        <taxon>Homo</taxon>
    </lineage>
</organism>
<keyword id="KW-0002">3D-structure</keyword>
<keyword id="KW-0025">Alternative splicing</keyword>
<keyword id="KW-1003">Cell membrane</keyword>
<keyword id="KW-0966">Cell projection</keyword>
<keyword id="KW-0225">Disease variant</keyword>
<keyword id="KW-1015">Disulfide bond</keyword>
<keyword id="KW-0887">Epilepsy</keyword>
<keyword id="KW-0325">Glycoprotein</keyword>
<keyword id="KW-0407">Ion channel</keyword>
<keyword id="KW-0406">Ion transport</keyword>
<keyword id="KW-0472">Membrane</keyword>
<keyword id="KW-0597">Phosphoprotein</keyword>
<keyword id="KW-1267">Proteomics identification</keyword>
<keyword id="KW-1185">Reference proteome</keyword>
<keyword id="KW-0677">Repeat</keyword>
<keyword id="KW-0915">Sodium</keyword>
<keyword id="KW-0894">Sodium channel</keyword>
<keyword id="KW-0739">Sodium transport</keyword>
<keyword id="KW-0812">Transmembrane</keyword>
<keyword id="KW-1133">Transmembrane helix</keyword>
<keyword id="KW-0813">Transport</keyword>
<keyword id="KW-0832">Ubl conjugation</keyword>
<keyword id="KW-0851">Voltage-gated channel</keyword>
<sequence>MAMLPPPGPQSFVHFTKQSLALIEQRIAERKSKEPKEEKKDDDEEAPKPSSDLEAGKQLPFIYGDIPPGMVSEPLEDLDPYYADKKTFIVLNKGKTIFRFNATPALYMLSPFSPLRRISIKILVHSLFSMLIMCTILTNCIFMTMNNPPDWTKNVEYTFTGIYTFESLVKILARGFCVGEFTFLRDPWNWLDFVVIVFAYLTEFVNLGNVSALRTFRVLRALKTISVIPGLKTIVGALIQSVKKLSDVMILTVFCLSVFALIGLQLFMGNLKHKCFRNSLENNETLESIMNTLESEEDFRKYFYYLEGSKDALLCGFSTDSGQCPEGYTCVKIGRNPDYGYTSFDTFSWAFLALFRLMTQDYWENLYQQTLRAAGKTYMIFFVVVIFLGSFYLINLILAVVAMAYEEQNQANIEEAKQKELEFQQMLDRLKKEQEEAEAIAAAAAEYTSIRRSRIMGLSESSSETSKLSSKSAKERRNRRKKKNQKKLSSGEEKGDAEKLSKSESEDSIRRKSFHLGVEGHRRAHEKRLSTPNQSPLSIRGSLFSARRSSRTSLFSFKGRGRDIGSETEFADDEHSIFGDNESRRGSLFVPHRPQERRSSNISQASRSPPMLPVNGKMHSAVDCNGVVSLVDGRSALMLPNGQLLPEVIIDKATSDDSGTTNQIHKKRRCSSYLLSEDMLNDPNLRQRAMSRASILTNTVEELEESRQKCPPWWYRFAHKFLIWNCSPYWIKFKKCIYFIVMDPFVDLAITICIVLNTLFMAMEHHPMTEEFKNVLAIGNLVFTGIFAAEMVLKLIAMDPYEYFQVGWNIFDSLIVTLSLVELFLADVEGLSVLRSFRLLRVFKLAKSWPTLNMLIKIIGNSVGALGNLTLVLAIIVFIFAVVGMQLFGKSYKECVCKINDDCTLPRWHMNDFFHSFLIVFRVLCGEWIETMWDCMEVAGQAMCLIVYMMVMVIGNLVVLNLFLALLLSSFSSDNLTAIEEDPDANNLQIAVTRIKKGINYVKQTLREFILKAFSKKPKISREIRQAEDLNTKKENYISNHTLAEMSKGHNFLKEKDKISGFGSSVDKHLMEDSDGQSFIHNPSLTVTVPIAPGESDLENMNAEELSSDSDSEYSKVRLNRSSSSECSTVDNPLPGEGEEAEAEPMNSDEPEACFTDGCVWRFSCCQVNIESGKGKIWWNIRKTCYKIVEHSWFESFIVLMILLSSGALAFEDIYIERKKTIKIILEYADKIFTYIFILEMLLKWIAYGYKTYFTNAWCWLDFLIVDVSLVTLVANTLGYSDLGPIKSLRTLRALRPLRALSRFEGMRVVVNALIGAIPSIMNVLLVCLIFWLIFSIMGVNLFAGKFYECINTTDGSRFPASQVPNRSECFALMNVSQNVRWKNLKVNFDNVGLGYLSLLQVATFKGWTIIMYAAVDSVNVDKQPKYEYSLYMYIYFVVFIIFGSFFTLNLFIGVIIDNFNQQKKKLGGQDIFMTEEQKKYYNAMKKLGSKKPQKPIPRPGNKIQGCIFDLVTNQAFDISIMVLICLNMVTMMVEKEGQSQHMTEVLYWINVVFIILFTGECVLKLISLRHYYFTVGWNIFDFVVVIISIVGMFLADLIETYFVSPTLFRVIRLARIGRILRLVKGAKGIRTLLFALMMSLPALFNIGLLLFLVMFIYAIFGMSNFAYVKKEDGINDMFNFETFGNSMICLFQITTSAGWDGLLAPILNSKPPDCDPKKVHPGSSVEGDCGNPSVGIFYFVSYIIISFLVVVNMYIAVILENFSVATEESTEPLSEDDFEMFYEVWEKFDPDATQFIEFSKLSDFAAALDPPLLIAKPNKVQLIAMDLPMVSGDRIHCLDILFAFTKRVLGESGEMDSLRSQMEERFMSANPSKVSYEPITTTLKRKQEDVSATVIQRAYRRYRLRQNVKNISSIYIKDGDRDDDLLNKKDMAFDNVNENSSPEKTDATSSTTSPPSYDSVTKPDKEKYEQDRTEKEDKGKDSKESKK</sequence>
<comment type="function">
    <text evidence="9 11 17 18 19 21 28 30 32 41">Pore-forming subunit of Nav1.7, a voltage-gated sodium (Nav) channel that directly mediates the depolarizing phase of action potentials in excitable membranes. Navs, also called VGSCs (voltage-gated sodium channels) or VDSCs (voltage-dependent sodium channels), operate by switching between closed and open conformations depending on the voltage difference across the membrane. In the open conformation they allow Na(+) ions to selectively pass through the pore, along their electrochemical gradient. The influx of Na(+) ions provokes membrane depolarization, initiating the propagation of electrical signals throughout cells and tissues (PubMed:15385606, PubMed:16988069, PubMed:17145499, PubMed:17167479, PubMed:19369487, PubMed:24311784, PubMed:25240195, PubMed:26680203, PubMed:7720699). Nav1.7 plays a crucial role in controlling the excitability and action potential propagation from nociceptor neurons, thereby contributing to the sensory perception of pain (PubMed:17145499, PubMed:17167479, PubMed:19369487, PubMed:24311784).</text>
</comment>
<comment type="catalytic activity">
    <reaction evidence="34 41">
        <text>Na(+)(in) = Na(+)(out)</text>
        <dbReference type="Rhea" id="RHEA:34963"/>
        <dbReference type="ChEBI" id="CHEBI:29101"/>
    </reaction>
</comment>
<comment type="activity regulation">
    <text evidence="24 25 26 27 29 33 34 35 36 41">Inhibited by tetrodotoxin (PubMed:23077250, PubMed:7720699). Weakly inhibited by saxitoxin (PubMed:23077250). Inhibited by the spider huwentoxin-IV that binds the extracellular loop S3-S4 of repeat II (PubMed:20855463, PubMed:21659528, PubMed:30765606). Inhibited by the spider protoxin-II that binds the extracellular loop S3-S4 of repeats II and IV (PubMed:20855463, PubMed:30661758, PubMed:30765606). Inhibited by the scorpion alpha-toxins CvIV4 and AaH2 (PubMed:21887265, PubMed:30733386). Inhibited by the conotoxin GVIIJ (PubMed:24497506). Inhibited by the spider beta/delta-theraphotoxin-Pre1a (PubMed:28428547).</text>
</comment>
<comment type="subunit">
    <text evidence="3 19 26 29 30 33 34 36 40 41">The Nav1.7 voltage-gated sodium channel consists of an ion-conducting alpha subunit SCN9A which is functional on its own regulated by one or more beta-1 (SCN1B), beta-2 (SCN2B), beta-3 (SCN3B) and beta-4 (SCN4B) subunits (PubMed:17167479, PubMed:25240195, PubMed:30765606, PubMed:7720699). SCN1B and SCN3B are non-covalently associated with SCN9A. SCN2B and SCN4B are disulfide-linked to SCN9A (PubMed:30765606). SCN1B regulates channel inactivation (PubMed:7720699). Interacts with NEDD4 and NEDD4L; regulates Nav1.7 activity most probably through ubiquitination and subsequent endocytosis (By similarity). Interacts with TMEM233; modulates the gating properties of NaV1.7 (PubMed:37117223).</text>
</comment>
<comment type="subcellular location">
    <subcellularLocation>
        <location evidence="11 19 21 28 30 32 41">Cell membrane</location>
        <topology evidence="36">Multi-pass membrane protein</topology>
    </subcellularLocation>
    <subcellularLocation>
        <location evidence="37">Cell projection</location>
        <location evidence="37">Neuron projection</location>
    </subcellularLocation>
    <subcellularLocation>
        <location evidence="37">Cell projection</location>
        <location evidence="37">Axon</location>
    </subcellularLocation>
    <text evidence="36 37">Localizes to neuron terminals (PubMed:30765606, PubMed:30795902). Also detected at Nodes of Ranvier (PubMed:30795902).</text>
</comment>
<comment type="alternative products">
    <event type="alternative splicing"/>
    <isoform>
        <id>Q15858-1</id>
        <name>1</name>
        <sequence type="displayed"/>
    </isoform>
    <isoform>
        <id>Q15858-2</id>
        <name>2</name>
        <sequence type="described" ref="VSP_012028"/>
    </isoform>
    <isoform>
        <id>Q15858-3</id>
        <name>3</name>
        <sequence type="described" ref="VSP_012029"/>
    </isoform>
    <isoform>
        <id>Q15858-4</id>
        <name>4</name>
        <sequence type="described" ref="VSP_012028 VSP_012029"/>
    </isoform>
</comment>
<comment type="tissue specificity">
    <text evidence="9 10 38 41 42">Expressed strongly in dorsal root ganglion, with only minor levels elsewhere in the body, smooth muscle cells, MTC cell line and C-cell carcinoma. Also expressed in vagus nerves within the head and neck region (PubMed:31647222). Isoform 1 is expressed preferentially in the central and peripheral nervous system. Isoform 2 is expressed preferentially in the dorsal root ganglion.</text>
</comment>
<comment type="domain">
    <text evidence="46">The sequence contains 4 internal repeats, each with 5 hydrophobic segments (S1, S2, S3, S5, S6) and one positively charged segment (S4). Segments S4 are probably the voltage-sensors and are characterized by a series of positively charged amino acids at every third position.</text>
</comment>
<comment type="PTM">
    <text evidence="30">Phosphorylation at Ser-1490 by PKC in a highly conserved cytoplasmic loop increases peak sodium currents.</text>
</comment>
<comment type="PTM">
    <text evidence="4">Ubiquitinated by NEDD4L; which may promote its endocytosis.</text>
</comment>
<comment type="disease" evidence="8 11 12 13 14 15 16 17 20 21 28">
    <disease id="DI-02201">
        <name>Primary erythermalgia</name>
        <acronym>PERYTHM</acronym>
        <description>Autosomal dominant disease characterized by recurrent episodes of severe pain associated with redness and warmth in the feet or hands.</description>
        <dbReference type="MIM" id="133020"/>
    </disease>
    <text>The disease is caused by variants affecting the gene represented in this entry.</text>
</comment>
<comment type="disease" evidence="23">
    <disease id="DI-01231">
        <name>Indifference to pain, congenital, autosomal recessive</name>
        <acronym>CIP</acronym>
        <description>A disorder characterized by congenital inability to perceive any form of pain, in any part of the body. All other sensory modalities are preserved and the peripheral and central nervous systems are apparently intact. Patients perceive the sensations of touch, warm and cold temperature, proprioception, tickle and pressure, but not painful stimuli. There is no evidence of a motor or sensory neuropathy, either axonal or demyelinating.</description>
        <dbReference type="MIM" id="243000"/>
    </disease>
    <text>The disease is caused by variants affecting the gene represented in this entry.</text>
</comment>
<comment type="disease" evidence="18 20 31">
    <disease id="DI-02140">
        <name>Paroxysmal extreme pain disorder</name>
        <acronym>PEXPD</acronym>
        <description>An autosomal dominant paroxysmal disorder of pain and autonomic dysfunction. The distinctive features are paroxysmal episodes of burning pain in the rectal, ocular, and mandibular areas accompanied by autonomic manifestations such as skin flushing.</description>
        <dbReference type="MIM" id="167400"/>
    </disease>
    <text>The disease is caused by variants affecting the gene represented in this entry.</text>
</comment>
<comment type="similarity">
    <text evidence="46">Belongs to the sodium channel (TC 1.A.1.10) family. Nav1.7/SCN9A subfamily.</text>
</comment>
<comment type="caution">
    <text evidence="22 39">SCN9A has been originally reported to be involved in generalized epilepsy with febrile seizures plus (GEFS+) (PubMed:19763161). However, it has later been shown that SCN9A variants are not a likely cause of autosomal dominant febrile seizures/febrile seizures plus and other monogenic seizure phenotypes (PubMed:33216760).</text>
</comment>
<comment type="online information" name="Wikipedia">
    <link uri="https://en.wikipedia.org/wiki/SCN9A"/>
    <text>SCN9A entry</text>
</comment>
<comment type="online information" name="Protein Spotlight">
    <link uri="https://www.proteinspotlight.org/back_issues/102"/>
    <text>Silent pain - Issue 102 of February 2009</text>
</comment>
<feature type="chain" id="PRO_0000048502" description="Sodium channel protein type 9 subunit alpha">
    <location>
        <begin position="1"/>
        <end position="1988"/>
    </location>
</feature>
<feature type="topological domain" description="Cytoplasmic" evidence="47">
    <location>
        <begin position="1"/>
        <end position="125"/>
    </location>
</feature>
<feature type="transmembrane region" description="Helical; Name=S1 of repeat I" evidence="47 52">
    <location>
        <begin position="126"/>
        <end position="145"/>
    </location>
</feature>
<feature type="topological domain" description="Extracellular" evidence="47">
    <location>
        <begin position="146"/>
        <end position="150"/>
    </location>
</feature>
<feature type="transmembrane region" description="Helical; Name=S2 of repeat I" evidence="47 52">
    <location>
        <begin position="151"/>
        <end position="172"/>
    </location>
</feature>
<feature type="topological domain" description="Cytoplasmic" evidence="47">
    <location>
        <begin position="173"/>
        <end position="185"/>
    </location>
</feature>
<feature type="transmembrane region" description="Helical; Name=S3 of repeat I" evidence="47 52">
    <location>
        <begin position="186"/>
        <end position="204"/>
    </location>
</feature>
<feature type="topological domain" description="Extracellular" evidence="47">
    <location>
        <begin position="205"/>
        <end position="210"/>
    </location>
</feature>
<feature type="transmembrane region" description="Helical; Name=S4 of repeat I" evidence="47 52">
    <location>
        <begin position="211"/>
        <end position="227"/>
    </location>
</feature>
<feature type="topological domain" description="Cytoplasmic" evidence="47">
    <location>
        <begin position="228"/>
        <end position="241"/>
    </location>
</feature>
<feature type="transmembrane region" description="Helical; Name=S5 of repeat I" evidence="47 52">
    <location>
        <begin position="242"/>
        <end position="267"/>
    </location>
</feature>
<feature type="topological domain" description="Extracellular" evidence="47">
    <location>
        <begin position="268"/>
        <end position="346"/>
    </location>
</feature>
<feature type="intramembrane region" description="Pore-forming" evidence="47 52">
    <location>
        <begin position="347"/>
        <end position="363"/>
    </location>
</feature>
<feature type="topological domain" description="Extracellular" evidence="47">
    <location>
        <begin position="364"/>
        <end position="376"/>
    </location>
</feature>
<feature type="transmembrane region" description="Helical; Name=S6 of repeat I" evidence="47 52">
    <location>
        <begin position="377"/>
        <end position="402"/>
    </location>
</feature>
<feature type="topological domain" description="Cytoplasmic" evidence="47">
    <location>
        <begin position="403"/>
        <end position="745"/>
    </location>
</feature>
<feature type="transmembrane region" description="Helical; Name=S1 of repeat II" evidence="47 52">
    <location>
        <begin position="746"/>
        <end position="762"/>
    </location>
</feature>
<feature type="topological domain" description="Extracellular" evidence="47">
    <location>
        <begin position="763"/>
        <end position="771"/>
    </location>
</feature>
<feature type="transmembrane region" description="Helical; Name=S2 of repeat II" evidence="47 52">
    <location>
        <begin position="772"/>
        <end position="796"/>
    </location>
</feature>
<feature type="topological domain" description="Cytoplasmic" evidence="47">
    <location>
        <begin position="797"/>
        <end position="805"/>
    </location>
</feature>
<feature type="transmembrane region" description="Helical; Name=S3 of repeat II" evidence="47 52">
    <location>
        <begin position="806"/>
        <end position="822"/>
    </location>
</feature>
<feature type="topological domain" description="Extracellular" evidence="47">
    <location>
        <begin position="823"/>
        <end position="831"/>
    </location>
</feature>
<feature type="transmembrane region" description="Helical; Name=S4 of repeat II" evidence="47 52">
    <location>
        <begin position="832"/>
        <end position="848"/>
    </location>
</feature>
<feature type="topological domain" description="Cytoplasmic" evidence="47">
    <location>
        <begin position="849"/>
        <end position="865"/>
    </location>
</feature>
<feature type="transmembrane region" description="Helical; Name=S5 of repeat II" evidence="47 52">
    <location>
        <begin position="866"/>
        <end position="888"/>
    </location>
</feature>
<feature type="topological domain" description="Extracellular" evidence="47">
    <location>
        <begin position="889"/>
        <end position="915"/>
    </location>
</feature>
<feature type="intramembrane region" description="Pore-forming" evidence="47 52">
    <location>
        <begin position="916"/>
        <end position="928"/>
    </location>
</feature>
<feature type="topological domain" description="Extracellular" evidence="47">
    <location>
        <begin position="929"/>
        <end position="940"/>
    </location>
</feature>
<feature type="transmembrane region" description="Helical; Name=S6 of repeat II" evidence="47 52">
    <location>
        <begin position="941"/>
        <end position="967"/>
    </location>
</feature>
<feature type="topological domain" description="Cytoplasmic" evidence="47">
    <location>
        <begin position="968"/>
        <end position="1187"/>
    </location>
</feature>
<feature type="transmembrane region" description="Helical; Name=S1 of repeat III" evidence="47 52">
    <location>
        <begin position="1188"/>
        <end position="1212"/>
    </location>
</feature>
<feature type="topological domain" description="Extracellular" evidence="47">
    <location>
        <begin position="1213"/>
        <end position="1224"/>
    </location>
</feature>
<feature type="transmembrane region" description="Helical; Name=S2 of repeat III" evidence="47 52">
    <location>
        <begin position="1225"/>
        <end position="1250"/>
    </location>
</feature>
<feature type="topological domain" description="Cytoplasmic" evidence="47">
    <location>
        <begin position="1251"/>
        <end position="1252"/>
    </location>
</feature>
<feature type="transmembrane region" description="Helical; Name=S3 of repeat III" evidence="47 52">
    <location>
        <begin position="1253"/>
        <end position="1278"/>
    </location>
</feature>
<feature type="topological domain" description="Extracellular" evidence="47">
    <location>
        <begin position="1279"/>
        <end position="1287"/>
    </location>
</feature>
<feature type="transmembrane region" description="Helical; Name=S4 of repeat III" evidence="47 52">
    <location>
        <begin position="1288"/>
        <end position="1304"/>
    </location>
</feature>
<feature type="topological domain" description="Cytoplasmic" evidence="47">
    <location>
        <begin position="1305"/>
        <end position="1317"/>
    </location>
</feature>
<feature type="transmembrane region" description="Helical; Name=S5 of repeat III" evidence="47 52">
    <location>
        <begin position="1318"/>
        <end position="1342"/>
    </location>
</feature>
<feature type="topological domain" description="Extracellular" evidence="47">
    <location>
        <begin position="1343"/>
        <end position="1394"/>
    </location>
</feature>
<feature type="intramembrane region" description="Pore-forming" evidence="47 52">
    <location>
        <begin position="1395"/>
        <end position="1405"/>
    </location>
</feature>
<feature type="topological domain" description="Extracellular" evidence="47">
    <location>
        <begin position="1406"/>
        <end position="1431"/>
    </location>
</feature>
<feature type="transmembrane region" description="Helical; Name=S6 of repeat III" evidence="47 52">
    <location>
        <begin position="1432"/>
        <end position="1457"/>
    </location>
</feature>
<feature type="topological domain" description="Cytoplasmic" evidence="47">
    <location>
        <begin position="1458"/>
        <end position="1514"/>
    </location>
</feature>
<feature type="transmembrane region" description="Helical; Name=S1 of repeat IV" evidence="47 52">
    <location>
        <begin position="1515"/>
        <end position="1534"/>
    </location>
</feature>
<feature type="topological domain" description="Extracellular" evidence="47">
    <location>
        <begin position="1535"/>
        <end position="1545"/>
    </location>
</feature>
<feature type="transmembrane region" description="Helical; Name=S2 of repeat IV" evidence="47 52">
    <location>
        <begin position="1546"/>
        <end position="1567"/>
    </location>
</feature>
<feature type="topological domain" description="Cytoplasmic" evidence="47">
    <location>
        <begin position="1568"/>
        <end position="1576"/>
    </location>
</feature>
<feature type="transmembrane region" description="Helical; Name=S3 of repeat IV" evidence="47 52">
    <location>
        <begin position="1577"/>
        <end position="1598"/>
    </location>
</feature>
<feature type="topological domain" description="Extracellular" evidence="47">
    <location>
        <begin position="1599"/>
        <end position="1607"/>
    </location>
</feature>
<feature type="transmembrane region" description="Helical; Name=S4 of repeat IV" evidence="47 52">
    <location>
        <begin position="1608"/>
        <end position="1627"/>
    </location>
</feature>
<feature type="topological domain" description="Cytoplasmic" evidence="47">
    <location>
        <begin position="1628"/>
        <end position="1640"/>
    </location>
</feature>
<feature type="transmembrane region" description="Helical; Name=S5 of repeat IV" evidence="47 52">
    <location>
        <begin position="1641"/>
        <end position="1663"/>
    </location>
</feature>
<feature type="topological domain" description="Extracellular" evidence="47">
    <location>
        <begin position="1664"/>
        <end position="1686"/>
    </location>
</feature>
<feature type="intramembrane region" description="Pore-forming" evidence="47 52">
    <location>
        <begin position="1687"/>
        <end position="1699"/>
    </location>
</feature>
<feature type="topological domain" description="Extracellular" evidence="47">
    <location>
        <begin position="1700"/>
        <end position="1733"/>
    </location>
</feature>
<feature type="transmembrane region" description="Helical; Name=S6 of repeat IV" evidence="47 52">
    <location>
        <begin position="1734"/>
        <end position="1759"/>
    </location>
</feature>
<feature type="topological domain" description="Cytoplasmic" evidence="47">
    <location>
        <begin position="1760"/>
        <end position="1988"/>
    </location>
</feature>
<feature type="repeat" description="I" evidence="46">
    <location>
        <begin position="112"/>
        <end position="410"/>
    </location>
</feature>
<feature type="repeat" description="II" evidence="46">
    <location>
        <begin position="726"/>
        <end position="989"/>
    </location>
</feature>
<feature type="repeat" description="III" evidence="46">
    <location>
        <begin position="1180"/>
        <end position="1488"/>
    </location>
</feature>
<feature type="repeat" description="IV" evidence="46">
    <location>
        <begin position="1497"/>
        <end position="1795"/>
    </location>
</feature>
<feature type="domain" description="IQ" evidence="6">
    <location>
        <begin position="1889"/>
        <end position="1918"/>
    </location>
</feature>
<feature type="region of interest" description="Disordered" evidence="7">
    <location>
        <begin position="26"/>
        <end position="55"/>
    </location>
</feature>
<feature type="region of interest" description="Disordered" evidence="7">
    <location>
        <begin position="461"/>
        <end position="543"/>
    </location>
</feature>
<feature type="region of interest" description="Disordered" evidence="7">
    <location>
        <begin position="565"/>
        <end position="611"/>
    </location>
</feature>
<feature type="region of interest" description="Disordered" evidence="7">
    <location>
        <begin position="1102"/>
        <end position="1148"/>
    </location>
</feature>
<feature type="region of interest" description="Disordered" evidence="7">
    <location>
        <begin position="1934"/>
        <end position="1988"/>
    </location>
</feature>
<feature type="compositionally biased region" description="Basic and acidic residues" evidence="7">
    <location>
        <begin position="26"/>
        <end position="39"/>
    </location>
</feature>
<feature type="compositionally biased region" description="Low complexity" evidence="7">
    <location>
        <begin position="461"/>
        <end position="471"/>
    </location>
</feature>
<feature type="compositionally biased region" description="Basic residues" evidence="7">
    <location>
        <begin position="474"/>
        <end position="486"/>
    </location>
</feature>
<feature type="compositionally biased region" description="Basic and acidic residues" evidence="7">
    <location>
        <begin position="489"/>
        <end position="510"/>
    </location>
</feature>
<feature type="compositionally biased region" description="Basic and acidic residues" evidence="7">
    <location>
        <begin position="573"/>
        <end position="585"/>
    </location>
</feature>
<feature type="compositionally biased region" description="Polar residues" evidence="7">
    <location>
        <begin position="1120"/>
        <end position="1131"/>
    </location>
</feature>
<feature type="compositionally biased region" description="Acidic residues" evidence="7">
    <location>
        <begin position="1137"/>
        <end position="1148"/>
    </location>
</feature>
<feature type="compositionally biased region" description="Low complexity" evidence="7">
    <location>
        <begin position="1948"/>
        <end position="1961"/>
    </location>
</feature>
<feature type="compositionally biased region" description="Basic and acidic residues" evidence="7">
    <location>
        <begin position="1962"/>
        <end position="1988"/>
    </location>
</feature>
<feature type="site" description="Is directly targeted by the spider protoxin-II" evidence="34">
    <location>
        <position position="822"/>
    </location>
</feature>
<feature type="site" description="Is directly targeted by the spider protoxin-II" evidence="34">
    <location>
        <position position="827"/>
    </location>
</feature>
<feature type="modified residue" description="Phosphoserine; by PKC" evidence="30">
    <location>
        <position position="1490"/>
    </location>
</feature>
<feature type="glycosylation site" description="N-linked (GlcNAc...) asparagine" evidence="5">
    <location>
        <position position="209"/>
    </location>
</feature>
<feature type="glycosylation site" description="N-linked (GlcNAc...) asparagine" evidence="36 50 51 52 53">
    <location>
        <position position="283"/>
    </location>
</feature>
<feature type="glycosylation site" description="N-linked (GlcNAc...) asparagine" evidence="36 50 51 52 53">
    <location>
        <position position="1352"/>
    </location>
</feature>
<feature type="glycosylation site" description="N-linked (GlcNAc...) asparagine" evidence="36 50 51 52 53">
    <location>
        <position position="1366"/>
    </location>
</feature>
<feature type="glycosylation site" description="N-linked (GlcNAc...) asparagine" evidence="36 50 51 52 53">
    <location>
        <position position="1375"/>
    </location>
</feature>
<feature type="disulfide bond" evidence="36 50 51 52 53">
    <location>
        <begin position="275"/>
        <end position="324"/>
    </location>
</feature>
<feature type="disulfide bond" description="Interchain; with SCN2B or SCN4B" evidence="36 50 51 52 53">
    <location>
        <position position="895"/>
    </location>
</feature>
<feature type="disulfide bond" description="Interchain; with the conotoxin GVIIJ (when the channel is not linked to SCN2B or SCN4B; the bond to SCN2B or SCN4B protects the channel from the inhibition by toxin)" evidence="2">
    <location>
        <position position="895"/>
    </location>
</feature>
<feature type="disulfide bond" evidence="36 50 51 52 53">
    <location>
        <begin position="897"/>
        <end position="903"/>
    </location>
</feature>
<feature type="disulfide bond" evidence="36 50 51 52 53">
    <location>
        <begin position="935"/>
        <end position="944"/>
    </location>
</feature>
<feature type="disulfide bond" evidence="36 50 51 52 53">
    <location>
        <begin position="1350"/>
        <end position="1370"/>
    </location>
</feature>
<feature type="disulfide bond" evidence="36 50 51 52 53">
    <location>
        <begin position="1715"/>
        <end position="1730"/>
    </location>
</feature>
<feature type="splice variant" id="VSP_012028" description="In isoform 2 and isoform 4." evidence="43">
    <original>YLTEFVNLGNVSALRTFRVLRALKTISVIP</original>
    <variation>YVTEFVDLGNVSALRTFRVLRALKTISVIP</variation>
    <location>
        <begin position="200"/>
        <end position="229"/>
    </location>
</feature>
<feature type="splice variant" id="VSP_012029" description="In isoform 3 and isoform 4." evidence="43 44 45">
    <location>
        <begin position="648"/>
        <end position="658"/>
    </location>
</feature>
<feature type="sequence variant" id="VAR_064595" description="In PERYTHM; causes a hyperpolarizing shift of -5.3 mV for the midpoint of activation which is smaller than that seen in other mutations causing early-onset erythromelalgia mutations; also causes a faster rate of activation and slower deactivation compared to wild-type; expression of the mutant protein induced hyperexcitability in dorsal root ganglion neurons but the increase is smaller than that produced by Thr-859; dbSNP:rs267607030." evidence="21">
    <original>Q</original>
    <variation>R</variation>
    <location>
        <position position="10"/>
    </location>
</feature>
<feature type="sequence variant" id="VAR_064596" description="Found in a patient with febrile seizures; uncertain significance; dbSNP:rs121908920." evidence="22">
    <original>I</original>
    <variation>V</variation>
    <location>
        <position position="62"/>
    </location>
</feature>
<feature type="sequence variant" id="VAR_064597" description="Found in a patient with febrile seizures; uncertain significance; dbSNP:rs121908921." evidence="22">
    <original>P</original>
    <variation>Q</variation>
    <location>
        <position position="149"/>
    </location>
</feature>
<feature type="sequence variant" id="VAR_064598" description="In PERYTHM; hyperpolarizes the voltage dependence of activation by 11 mV, accelerates activation, slows deactivation and enhances the response to slow, small depolarizations; dbSNP:rs80356469." evidence="12 17">
    <original>F</original>
    <variation>S</variation>
    <location>
        <position position="216"/>
    </location>
</feature>
<feature type="sequence variant" id="VAR_064599" description="In dbSNP:rs71428908." evidence="22">
    <original>I</original>
    <variation>M</variation>
    <location>
        <position position="228"/>
    </location>
</feature>
<feature type="sequence variant" id="VAR_032014" description="In PERYTHM; dbSNP:rs80356470." evidence="14">
    <original>S</original>
    <variation>T</variation>
    <location>
        <position position="241"/>
    </location>
</feature>
<feature type="sequence variant" id="VAR_064600" description="In PERYTHM; dbSNP:rs80356471." evidence="12">
    <original>N</original>
    <variation>K</variation>
    <location>
        <position position="395"/>
    </location>
</feature>
<feature type="sequence variant" id="VAR_064602" description="In dbSNP:rs58022607." evidence="22">
    <original>S</original>
    <variation>N</variation>
    <location>
        <position position="490"/>
    </location>
</feature>
<feature type="sequence variant" id="VAR_064603" description="In dbSNP:rs187453572." evidence="22">
    <original>E</original>
    <variation>K</variation>
    <location>
        <position position="519"/>
    </location>
</feature>
<feature type="sequence variant" id="VAR_064604" description="Found in patients with febrile seizures plus; uncertain significance; dbSNP:rs121908918." evidence="22 39">
    <original>N</original>
    <variation>Y</variation>
    <location>
        <position position="641"/>
    </location>
</feature>
<feature type="sequence variant" id="VAR_064605" description="In dbSNP:rs121908919." evidence="22">
    <original>K</original>
    <variation>R</variation>
    <location>
        <position position="666"/>
    </location>
</feature>
<feature type="sequence variant" id="VAR_064606" description="In dbSNP:rs199588089." evidence="22">
    <original>I</original>
    <variation>M</variation>
    <location>
        <position position="695"/>
    </location>
</feature>
<feature type="sequence variant" id="VAR_064607" description="Found in a patient with severe myoclonic epilepsy in infancy; uncertain significance; dbSNP:rs201709980." evidence="22">
    <original>C</original>
    <variation>Y</variation>
    <location>
        <position position="710"/>
    </location>
</feature>
<feature type="sequence variant" id="VAR_064608" description="In dbSNP:rs182650126." evidence="22">
    <original>I</original>
    <variation>V</variation>
    <location>
        <position position="750"/>
    </location>
</feature>
<feature type="sequence variant" id="VAR_019947" description="In PERYTHM; sporadic; activated at more negative potentials; slower inactivation kinetics than wild-type channels; dbSNP:rs80356474." evidence="8 11 12 21">
    <original>I</original>
    <variation>T</variation>
    <location>
        <position position="859"/>
    </location>
</feature>
<feature type="sequence variant" id="VAR_064609" description="In PERYTHM; causes a hyperpolarizing shift in channel activation, a depolarizing shift of inactivation and an 18-fold increase in deactivation time compared to wild-type; the mean ramp current amplitude in response to slow depolarization is higher in the mutant channels; dbSNP:rs80356476." evidence="12 15">
    <original>L</original>
    <variation>F</variation>
    <location>
        <position position="869"/>
    </location>
</feature>
<feature type="sequence variant" id="VAR_019948" description="In PERYTHM; activated at more negative potentials; slower inactivation kinetics than wild-type channels; dbSNP:rs80356475." evidence="8 11 16">
    <original>L</original>
    <variation>H</variation>
    <location>
        <position position="869"/>
    </location>
</feature>
<feature type="sequence variant" id="VAR_064610" description="In CIP; significant reduction in membrane localization of the mutant protein compared to the wild-type; complete loss of function of the sodium channel; dbSNP:rs1024152367." evidence="23">
    <original>R</original>
    <variation>Q</variation>
    <location>
        <position position="907"/>
    </location>
</feature>
<feature type="sequence variant" id="VAR_030444" description="In dbSNP:rs12478318.">
    <original>M</original>
    <variation>L</variation>
    <location>
        <position position="932"/>
    </location>
</feature>
<feature type="sequence variant" id="VAR_055646" description="In dbSNP:rs12478318.">
    <original>M</original>
    <variation>L</variation>
    <location>
        <position position="943"/>
    </location>
</feature>
<feature type="sequence variant" id="VAR_032015" description="In PEXPD; dbSNP:rs121908910." evidence="18">
    <original>R</original>
    <variation>C</variation>
    <location>
        <position position="1007"/>
    </location>
</feature>
<feature type="sequence variant" id="VAR_064611" description="In dbSNP:rs200160858." evidence="22">
    <original>L</original>
    <variation>F</variation>
    <location>
        <position position="1134"/>
    </location>
</feature>
<feature type="sequence variant" id="VAR_019949" description="In dbSNP:rs6746030." evidence="12 19 41">
    <original>W</original>
    <variation>R</variation>
    <location>
        <position position="1161"/>
    </location>
</feature>
<feature type="sequence variant" id="VAR_064612" description="Found in a patient with severe myoclonic epilepsy in infancy; uncertain significance." evidence="22">
    <original>E</original>
    <variation>Q</variation>
    <location>
        <position position="1171"/>
    </location>
</feature>
<feature type="sequence variant" id="VAR_064613" description="In dbSNP:rs180922748." evidence="22">
    <original>L</original>
    <variation>V</variation>
    <location>
        <position position="1278"/>
    </location>
</feature>
<feature type="sequence variant" id="VAR_032016" description="In PEXPD; dbSNP:rs121908911." evidence="18">
    <original>V</original>
    <variation>D</variation>
    <location>
        <position position="1309"/>
    </location>
</feature>
<feature type="sequence variant" id="VAR_032017" description="In PEXPD; dbSNP:rs121908912." evidence="18">
    <original>V</original>
    <variation>F</variation>
    <location>
        <position position="1309"/>
    </location>
</feature>
<feature type="sequence variant" id="VAR_032018" description="In PEXPD; dbSNP:rs121908913." evidence="18">
    <original>V</original>
    <variation>F</variation>
    <location>
        <position position="1310"/>
    </location>
</feature>
<feature type="sequence variant" id="VAR_064614" description="In CIP; significant reduction in membrane localization of the mutant protein compared to the wild-type; complete loss of function of the sodium channel." evidence="23">
    <location>
        <begin position="1381"/>
        <end position="1385"/>
    </location>
</feature>
<feature type="sequence variant" id="VAR_032019" description="In PERYTHM; produces a hyperpolarizing shift in channel activation and a depolarizing shift in steady-state activation; dbSNP:rs80356478." evidence="13">
    <original>F</original>
    <variation>V</variation>
    <location>
        <position position="1460"/>
    </location>
</feature>
<feature type="sequence variant" id="VAR_032020" description="In PEXPD; reduction in fast inactivation leading to persistent sodium current; dbSNP:rs121908914." evidence="18">
    <original>I</original>
    <variation>T</variation>
    <location>
        <position position="1472"/>
    </location>
</feature>
<feature type="sequence variant" id="VAR_032021" description="In PEXPD; dbSNP:rs1553474394." evidence="18">
    <original>F</original>
    <variation>V</variation>
    <location>
        <position position="1473"/>
    </location>
</feature>
<feature type="sequence variant" id="VAR_032022" description="In PEXPD; reduction in fast inactivation leading to persistent sodium current; dbSNP:rs121908915." evidence="18">
    <original>T</original>
    <variation>I</variation>
    <location>
        <position position="1475"/>
    </location>
</feature>
<feature type="sequence variant" id="VAR_072279" description="In PEXPD; depolarizes the voltage-dependence of channel activation and steady-state fast inactivation; increases ramp current; dbSNP:rs1131691776." evidence="31">
    <original>L</original>
    <variation>P</variation>
    <location>
        <position position="1623"/>
    </location>
</feature>
<feature type="sequence variant" id="VAR_032023" description="In PEXPD; reduction in fast inactivation leading to persistent sodium current." evidence="18">
    <original>M</original>
    <variation>K</variation>
    <location>
        <position position="1638"/>
    </location>
</feature>
<feature type="sequence variant" id="VAR_072280" description="In PERYTHM and PEXPD; hyperpolarizes voltage-dependence of channel activation; depolarizes the voltage-dependence of steady-state fast inactivation; slows channel deactivation; enhances persistent and resurgent current; enhances neuronal hyperexcitability in dorsal root ganglion neurons; dbSNP:rs879253994." evidence="20 28">
    <original>A</original>
    <variation>E</variation>
    <location>
        <position position="1643"/>
    </location>
</feature>
<feature type="sequence variant" id="VAR_072281" description="In PERYTHM; no effect on voltage-dependence of channel activation; depolarizes the voltage dependence of steady-state fast inactivation; accelerates channel deactivation; no increase in persistent and resurgent currents; enhances neuronal hyperexcitability in dorsal root ganglion neurons." evidence="28">
    <original>A</original>
    <variation>T</variation>
    <location>
        <position position="1643"/>
    </location>
</feature>
<feature type="sequence variant" id="VAR_019950" description="In dbSNP:rs3750904.">
    <original>D</original>
    <variation>G</variation>
    <location>
        <position position="1919"/>
    </location>
</feature>
<feature type="mutagenesis site" description="Hyperpolarizes the voltage dependence of activation by 10.6 mV and prolonges fast-inactivation duration when coexpressed with SCN1B and SCN2B." evidence="36">
    <original>E</original>
    <variation>K</variation>
    <location>
        <position position="406"/>
    </location>
</feature>
<feature type="mutagenesis site" description="5-fold less blocked by the spider huwentoxin-IV." evidence="25">
    <original>E</original>
    <variation>Q</variation>
    <location>
        <position position="764"/>
    </location>
</feature>
<feature type="mutagenesis site" description="5-fold less inhibited by the spider protoxin-II." evidence="34">
    <original>I</original>
    <variation>A</variation>
    <location>
        <position position="778"/>
    </location>
</feature>
<feature type="mutagenesis site" description="No change in inhibition (IC(50)) by the spider protoxin-II, but has a significant impact on channel activation by shifiting the V(50) towart 0 mV when targeted by protoxin-II." evidence="34">
    <original>E</original>
    <variation>A</variation>
    <location>
        <position position="822"/>
    </location>
</feature>
<feature type="mutagenesis site" description="18-fold less blocked by the spider huwentoxin-IV." evidence="25">
    <original>E</original>
    <variation>Q</variation>
    <location>
        <position position="822"/>
    </location>
</feature>
<feature type="mutagenesis site" description="9-fold less inhibited by the spider protoxin-II." evidence="34">
    <original>L</original>
    <variation>A</variation>
    <location>
        <position position="823"/>
    </location>
</feature>
<feature type="mutagenesis site" description="4-fold less inhibited by the spider protoxin-II." evidence="34">
    <original>F</original>
    <variation>A</variation>
    <location>
        <position position="824"/>
    </location>
</feature>
<feature type="mutagenesis site" description="Less inhibited by the spider protoxin-II." evidence="34">
    <original>F</original>
    <variation>C</variation>
    <location>
        <position position="824"/>
    </location>
</feature>
<feature type="mutagenesis site" description="No change in inhibition by the spider protoxin-II." evidence="34">
    <original>L</original>
    <variation>A</variation>
    <location>
        <position position="825"/>
    </location>
</feature>
<feature type="mutagenesis site" description="19-fold less blocked by the spider huwentoxin-IV." evidence="25">
    <original>L</original>
    <variation>C</variation>
    <location>
        <position position="825"/>
    </location>
</feature>
<feature type="mutagenesis site" description="8-fold less inhibited by the spider protoxin-II." evidence="34">
    <original>A</original>
    <variation>L</variation>
    <location>
        <position position="826"/>
    </location>
</feature>
<feature type="mutagenesis site" description="13-fold less blocked by the spider huwentoxin-IV, 3-fold less inhibited by the spider protoxin-II, and has a significant impact on channel activation by shifiting the V(50) towart 0 mV when targeted by protoxin-II." evidence="25 34">
    <original>D</original>
    <variation>A</variation>
    <location>
        <position position="827"/>
    </location>
</feature>
<feature type="mutagenesis site" description="400-fold less blocked by the spider huwentoxin-IV." evidence="24">
    <original>E</original>
    <variation>C</variation>
    <location>
        <position position="829"/>
    </location>
</feature>
<feature type="mutagenesis site" description="Important increase in inhibition by saxitoxin and little increase in inhibition by tetrodotoxin." evidence="27">
    <original>TI</original>
    <variation>MD</variation>
    <location>
        <begin position="1409"/>
        <end position="1410"/>
    </location>
</feature>
<feature type="mutagenesis site" description="Abolishes stimulation by agents that stimulate PKC activity." evidence="30">
    <original>S</original>
    <variation>A</variation>
    <location>
        <position position="1490"/>
    </location>
</feature>
<feature type="mutagenesis site" description="Increases current amplitude." evidence="30">
    <original>S</original>
    <variation>D</variation>
    <variation>E</variation>
    <location>
        <position position="1490"/>
    </location>
</feature>
<feature type="mutagenesis site" description="Decrease of the inhibition of fast inactivation produced by scorpion alpha-toxins CvIV4 and AaH2 on this channel." evidence="26 35">
    <original>D</original>
    <variation>A</variation>
    <location>
        <position position="1597"/>
    </location>
</feature>
<feature type="mutagenesis site" description="Decrease of the inhibition of fast inactivation produced by the scorpion alpha-toxin CvIV4 on this channel." evidence="26">
    <original>E</original>
    <variation>Q</variation>
    <location>
        <position position="1600"/>
    </location>
</feature>
<feature type="mutagenesis site" description="Depolarizes the voltage-dependence of steady-state fast inactivation; enhances persistent current." evidence="28">
    <original>A</original>
    <variation>D</variation>
    <location>
        <position position="1643"/>
    </location>
</feature>
<feature type="mutagenesis site" description="No effect on voltage-dependence of steady-state fast inactivation." evidence="28">
    <original>A</original>
    <variation>K</variation>
    <location>
        <position position="1643"/>
    </location>
</feature>
<feature type="mutagenesis site" description="No effect on voltage-dependence of steady-state fast inactivation." evidence="28">
    <original>A</original>
    <variation>V</variation>
    <location>
        <position position="1643"/>
    </location>
</feature>
<feature type="sequence conflict" description="In Ref. 4; AAT85834." evidence="46" ref="4">
    <original>F</original>
    <variation>S</variation>
    <location>
        <position position="267"/>
    </location>
</feature>
<feature type="sequence conflict" description="In Ref. 4; AAT85835." evidence="46" ref="4">
    <original>K</original>
    <variation>R</variation>
    <location>
        <position position="301"/>
    </location>
</feature>
<feature type="sequence conflict" description="In Ref. 4; AAT85834." evidence="46" ref="4">
    <original>S</original>
    <variation>P</variation>
    <location>
        <position position="309"/>
    </location>
</feature>
<feature type="sequence conflict" description="In Ref. 4; AAT85834." evidence="46" ref="4">
    <original>E</original>
    <variation>G</variation>
    <location>
        <position position="420"/>
    </location>
</feature>
<feature type="sequence conflict" description="In Ref. 4; AAT85834." evidence="46" ref="4">
    <original>L</original>
    <variation>P</variation>
    <location>
        <position position="430"/>
    </location>
</feature>
<feature type="sequence conflict" description="In Ref. 4; AAT85835." evidence="46" ref="4">
    <original>S</original>
    <variation>P</variation>
    <location>
        <position position="501"/>
    </location>
</feature>
<feature type="sequence conflict" description="In Ref. 4; AAT85835." evidence="46" ref="4">
    <original>P</original>
    <variation>T</variation>
    <location>
        <position position="610"/>
    </location>
</feature>
<feature type="sequence conflict" description="In Ref. 4; AAT85835." evidence="46" ref="4">
    <original>G</original>
    <variation>R</variation>
    <location>
        <position position="642"/>
    </location>
</feature>
<feature type="helix" evidence="71">
    <location>
        <begin position="9"/>
        <end position="11"/>
    </location>
</feature>
<feature type="helix" evidence="59">
    <location>
        <begin position="17"/>
        <end position="33"/>
    </location>
</feature>
<feature type="turn" evidence="59">
    <location>
        <begin position="51"/>
        <end position="53"/>
    </location>
</feature>
<feature type="strand" evidence="59">
    <location>
        <begin position="54"/>
        <end position="58"/>
    </location>
</feature>
<feature type="helix" evidence="59">
    <location>
        <begin position="61"/>
        <end position="63"/>
    </location>
</feature>
<feature type="turn" evidence="59">
    <location>
        <begin position="68"/>
        <end position="70"/>
    </location>
</feature>
<feature type="strand" evidence="59">
    <location>
        <begin position="71"/>
        <end position="73"/>
    </location>
</feature>
<feature type="helix" evidence="59">
    <location>
        <begin position="80"/>
        <end position="84"/>
    </location>
</feature>
<feature type="strand" evidence="59">
    <location>
        <begin position="85"/>
        <end position="91"/>
    </location>
</feature>
<feature type="turn" evidence="71">
    <location>
        <begin position="93"/>
        <end position="95"/>
    </location>
</feature>
<feature type="strand" evidence="59">
    <location>
        <begin position="96"/>
        <end position="101"/>
    </location>
</feature>
<feature type="turn" evidence="59">
    <location>
        <begin position="106"/>
        <end position="108"/>
    </location>
</feature>
<feature type="strand" evidence="59">
    <location>
        <begin position="111"/>
        <end position="113"/>
    </location>
</feature>
<feature type="helix" evidence="59">
    <location>
        <begin position="114"/>
        <end position="123"/>
    </location>
</feature>
<feature type="helix" evidence="59">
    <location>
        <begin position="126"/>
        <end position="143"/>
    </location>
</feature>
<feature type="helix" evidence="59">
    <location>
        <begin position="150"/>
        <end position="152"/>
    </location>
</feature>
<feature type="helix" evidence="59">
    <location>
        <begin position="153"/>
        <end position="174"/>
    </location>
</feature>
<feature type="strand" evidence="59">
    <location>
        <begin position="176"/>
        <end position="182"/>
    </location>
</feature>
<feature type="helix" evidence="59">
    <location>
        <begin position="183"/>
        <end position="185"/>
    </location>
</feature>
<feature type="strand" evidence="64">
    <location>
        <begin position="186"/>
        <end position="188"/>
    </location>
</feature>
<feature type="helix" evidence="59">
    <location>
        <begin position="189"/>
        <end position="205"/>
    </location>
</feature>
<feature type="helix" evidence="59">
    <location>
        <begin position="210"/>
        <end position="221"/>
    </location>
</feature>
<feature type="helix" evidence="59">
    <location>
        <begin position="223"/>
        <end position="227"/>
    </location>
</feature>
<feature type="strand" evidence="65">
    <location>
        <begin position="228"/>
        <end position="230"/>
    </location>
</feature>
<feature type="helix" evidence="59">
    <location>
        <begin position="231"/>
        <end position="244"/>
    </location>
</feature>
<feature type="helix" evidence="59">
    <location>
        <begin position="246"/>
        <end position="267"/>
    </location>
</feature>
<feature type="helix" evidence="59">
    <location>
        <begin position="270"/>
        <end position="272"/>
    </location>
</feature>
<feature type="strand" evidence="59">
    <location>
        <begin position="273"/>
        <end position="278"/>
    </location>
</feature>
<feature type="strand" evidence="59">
    <location>
        <begin position="281"/>
        <end position="283"/>
    </location>
</feature>
<feature type="helix" evidence="59">
    <location>
        <begin position="286"/>
        <end position="291"/>
    </location>
</feature>
<feature type="helix" evidence="59">
    <location>
        <begin position="296"/>
        <end position="299"/>
    </location>
</feature>
<feature type="turn" evidence="59">
    <location>
        <begin position="300"/>
        <end position="302"/>
    </location>
</feature>
<feature type="strand" evidence="66">
    <location>
        <begin position="317"/>
        <end position="321"/>
    </location>
</feature>
<feature type="strand" evidence="59">
    <location>
        <begin position="328"/>
        <end position="332"/>
    </location>
</feature>
<feature type="turn" evidence="59">
    <location>
        <begin position="337"/>
        <end position="341"/>
    </location>
</feature>
<feature type="strand" evidence="59">
    <location>
        <begin position="344"/>
        <end position="346"/>
    </location>
</feature>
<feature type="helix" evidence="59">
    <location>
        <begin position="347"/>
        <end position="359"/>
    </location>
</feature>
<feature type="helix" evidence="59">
    <location>
        <begin position="363"/>
        <end position="374"/>
    </location>
</feature>
<feature type="helix" evidence="59">
    <location>
        <begin position="376"/>
        <end position="378"/>
    </location>
</feature>
<feature type="helix" evidence="59">
    <location>
        <begin position="379"/>
        <end position="388"/>
    </location>
</feature>
<feature type="turn" evidence="59">
    <location>
        <begin position="389"/>
        <end position="391"/>
    </location>
</feature>
<feature type="helix" evidence="59">
    <location>
        <begin position="392"/>
        <end position="434"/>
    </location>
</feature>
<feature type="helix" evidence="59">
    <location>
        <begin position="729"/>
        <end position="740"/>
    </location>
</feature>
<feature type="turn" evidence="59">
    <location>
        <begin position="743"/>
        <end position="745"/>
    </location>
</feature>
<feature type="helix" evidence="59">
    <location>
        <begin position="746"/>
        <end position="761"/>
    </location>
</feature>
<feature type="strand" evidence="60">
    <location>
        <begin position="765"/>
        <end position="767"/>
    </location>
</feature>
<feature type="helix" evidence="74">
    <location>
        <begin position="768"/>
        <end position="772"/>
    </location>
</feature>
<feature type="helix" evidence="59">
    <location>
        <begin position="800"/>
        <end position="803"/>
    </location>
</feature>
<feature type="helix" evidence="59">
    <location>
        <begin position="807"/>
        <end position="824"/>
    </location>
</feature>
<feature type="strand" evidence="58">
    <location>
        <begin position="825"/>
        <end position="827"/>
    </location>
</feature>
<feature type="helix" evidence="63">
    <location>
        <begin position="828"/>
        <end position="830"/>
    </location>
</feature>
<feature type="turn" evidence="58">
    <location>
        <begin position="831"/>
        <end position="833"/>
    </location>
</feature>
<feature type="helix" evidence="59">
    <location>
        <begin position="834"/>
        <end position="846"/>
    </location>
</feature>
<feature type="helix" evidence="59">
    <location>
        <begin position="852"/>
        <end position="862"/>
    </location>
</feature>
<feature type="turn" evidence="59">
    <location>
        <begin position="863"/>
        <end position="866"/>
    </location>
</feature>
<feature type="helix" evidence="59">
    <location>
        <begin position="867"/>
        <end position="894"/>
    </location>
</feature>
<feature type="helix" evidence="59">
    <location>
        <begin position="896"/>
        <end position="899"/>
    </location>
</feature>
<feature type="strand" evidence="61">
    <location>
        <begin position="901"/>
        <end position="903"/>
    </location>
</feature>
<feature type="strand" evidence="66">
    <location>
        <begin position="910"/>
        <end position="912"/>
    </location>
</feature>
<feature type="helix" evidence="59">
    <location>
        <begin position="913"/>
        <end position="925"/>
    </location>
</feature>
<feature type="helix" evidence="59">
    <location>
        <begin position="929"/>
        <end position="939"/>
    </location>
</feature>
<feature type="helix" evidence="59">
    <location>
        <begin position="941"/>
        <end position="972"/>
    </location>
</feature>
<feature type="helix" evidence="62">
    <location>
        <begin position="973"/>
        <end position="976"/>
    </location>
</feature>
<feature type="strand" evidence="59">
    <location>
        <begin position="981"/>
        <end position="984"/>
    </location>
</feature>
<feature type="helix" evidence="59">
    <location>
        <begin position="987"/>
        <end position="1013"/>
    </location>
</feature>
<feature type="helix" evidence="59">
    <location>
        <begin position="1176"/>
        <end position="1189"/>
    </location>
</feature>
<feature type="helix" evidence="59">
    <location>
        <begin position="1192"/>
        <end position="1209"/>
    </location>
</feature>
<feature type="helix" evidence="59">
    <location>
        <begin position="1216"/>
        <end position="1218"/>
    </location>
</feature>
<feature type="helix" evidence="59">
    <location>
        <begin position="1220"/>
        <end position="1254"/>
    </location>
</feature>
<feature type="helix" evidence="59">
    <location>
        <begin position="1257"/>
        <end position="1277"/>
    </location>
</feature>
<feature type="strand" evidence="62">
    <location>
        <begin position="1278"/>
        <end position="1280"/>
    </location>
</feature>
<feature type="helix" evidence="59">
    <location>
        <begin position="1284"/>
        <end position="1290"/>
    </location>
</feature>
<feature type="helix" evidence="59">
    <location>
        <begin position="1291"/>
        <end position="1299"/>
    </location>
</feature>
<feature type="helix" evidence="59">
    <location>
        <begin position="1300"/>
        <end position="1303"/>
    </location>
</feature>
<feature type="helix" evidence="59">
    <location>
        <begin position="1305"/>
        <end position="1343"/>
    </location>
</feature>
<feature type="turn" evidence="72">
    <location>
        <begin position="1344"/>
        <end position="1347"/>
    </location>
</feature>
<feature type="strand" evidence="59">
    <location>
        <begin position="1348"/>
        <end position="1352"/>
    </location>
</feature>
<feature type="turn" evidence="59">
    <location>
        <begin position="1353"/>
        <end position="1356"/>
    </location>
</feature>
<feature type="strand" evidence="59">
    <location>
        <begin position="1361"/>
        <end position="1364"/>
    </location>
</feature>
<feature type="helix" evidence="59">
    <location>
        <begin position="1367"/>
        <end position="1376"/>
    </location>
</feature>
<feature type="strand" evidence="59">
    <location>
        <begin position="1378"/>
        <end position="1384"/>
    </location>
</feature>
<feature type="strand" evidence="73">
    <location>
        <begin position="1386"/>
        <end position="1388"/>
    </location>
</feature>
<feature type="strand" evidence="59">
    <location>
        <begin position="1389"/>
        <end position="1391"/>
    </location>
</feature>
<feature type="helix" evidence="59">
    <location>
        <begin position="1392"/>
        <end position="1403"/>
    </location>
</feature>
<feature type="helix" evidence="59">
    <location>
        <begin position="1408"/>
        <end position="1417"/>
    </location>
</feature>
<feature type="strand" evidence="67">
    <location>
        <begin position="1421"/>
        <end position="1423"/>
    </location>
</feature>
<feature type="turn" evidence="59">
    <location>
        <begin position="1427"/>
        <end position="1430"/>
    </location>
</feature>
<feature type="helix" evidence="59">
    <location>
        <begin position="1431"/>
        <end position="1433"/>
    </location>
</feature>
<feature type="helix" evidence="59">
    <location>
        <begin position="1434"/>
        <end position="1444"/>
    </location>
</feature>
<feature type="helix" evidence="59">
    <location>
        <begin position="1446"/>
        <end position="1466"/>
    </location>
</feature>
<feature type="turn" evidence="64">
    <location>
        <begin position="1467"/>
        <end position="1469"/>
    </location>
</feature>
<feature type="strand" evidence="66">
    <location>
        <begin position="1472"/>
        <end position="1474"/>
    </location>
</feature>
<feature type="helix" evidence="59">
    <location>
        <begin position="1476"/>
        <end position="1488"/>
    </location>
</feature>
<feature type="helix" evidence="59">
    <location>
        <begin position="1503"/>
        <end position="1512"/>
    </location>
</feature>
<feature type="helix" evidence="59">
    <location>
        <begin position="1515"/>
        <end position="1534"/>
    </location>
</feature>
<feature type="helix" evidence="59">
    <location>
        <begin position="1541"/>
        <end position="1568"/>
    </location>
</feature>
<feature type="helix" evidence="59">
    <location>
        <begin position="1570"/>
        <end position="1575"/>
    </location>
</feature>
<feature type="helix" evidence="59">
    <location>
        <begin position="1577"/>
        <end position="1599"/>
    </location>
</feature>
<feature type="turn" evidence="70">
    <location>
        <begin position="1600"/>
        <end position="1602"/>
    </location>
</feature>
<feature type="helix" evidence="59">
    <location>
        <begin position="1606"/>
        <end position="1612"/>
    </location>
</feature>
<feature type="helix" evidence="59">
    <location>
        <begin position="1613"/>
        <end position="1616"/>
    </location>
</feature>
<feature type="helix" evidence="59">
    <location>
        <begin position="1617"/>
        <end position="1621"/>
    </location>
</feature>
<feature type="helix" evidence="59">
    <location>
        <begin position="1623"/>
        <end position="1626"/>
    </location>
</feature>
<feature type="strand" evidence="59">
    <location>
        <begin position="1628"/>
        <end position="1630"/>
    </location>
</feature>
<feature type="helix" evidence="59">
    <location>
        <begin position="1631"/>
        <end position="1639"/>
    </location>
</feature>
<feature type="helix" evidence="59">
    <location>
        <begin position="1641"/>
        <end position="1665"/>
    </location>
</feature>
<feature type="strand" evidence="68">
    <location>
        <begin position="1666"/>
        <end position="1669"/>
    </location>
</feature>
<feature type="strand" evidence="60">
    <location>
        <begin position="1672"/>
        <end position="1674"/>
    </location>
</feature>
<feature type="strand" evidence="59">
    <location>
        <begin position="1677"/>
        <end position="1683"/>
    </location>
</feature>
<feature type="helix" evidence="59">
    <location>
        <begin position="1684"/>
        <end position="1695"/>
    </location>
</feature>
<feature type="turn" evidence="59">
    <location>
        <begin position="1696"/>
        <end position="1699"/>
    </location>
</feature>
<feature type="helix" evidence="59">
    <location>
        <begin position="1700"/>
        <end position="1707"/>
    </location>
</feature>
<feature type="turn" evidence="69">
    <location>
        <begin position="1712"/>
        <end position="1714"/>
    </location>
</feature>
<feature type="strand" evidence="60">
    <location>
        <begin position="1722"/>
        <end position="1724"/>
    </location>
</feature>
<feature type="helix" evidence="59">
    <location>
        <begin position="1733"/>
        <end position="1767"/>
    </location>
</feature>
<feature type="helix" evidence="59">
    <location>
        <begin position="1776"/>
        <end position="1786"/>
    </location>
</feature>
<feature type="turn" evidence="59">
    <location>
        <begin position="1787"/>
        <end position="1789"/>
    </location>
</feature>
<feature type="strand" evidence="59">
    <location>
        <begin position="1795"/>
        <end position="1798"/>
    </location>
</feature>
<feature type="helix" evidence="59">
    <location>
        <begin position="1799"/>
        <end position="1805"/>
    </location>
</feature>
<feature type="turn" evidence="59">
    <location>
        <begin position="1806"/>
        <end position="1808"/>
    </location>
</feature>
<feature type="turn" evidence="59">
    <location>
        <begin position="1811"/>
        <end position="1813"/>
    </location>
</feature>
<feature type="helix" evidence="59">
    <location>
        <begin position="1820"/>
        <end position="1825"/>
    </location>
</feature>
<feature type="strand" evidence="59">
    <location>
        <begin position="1829"/>
        <end position="1831"/>
    </location>
</feature>
<feature type="turn" evidence="59">
    <location>
        <begin position="1832"/>
        <end position="1834"/>
    </location>
</feature>
<feature type="strand" evidence="59">
    <location>
        <begin position="1835"/>
        <end position="1837"/>
    </location>
</feature>
<feature type="helix" evidence="59">
    <location>
        <begin position="1838"/>
        <end position="1850"/>
    </location>
</feature>
<feature type="helix" evidence="59">
    <location>
        <begin position="1855"/>
        <end position="1870"/>
    </location>
</feature>
<feature type="helix" evidence="59">
    <location>
        <begin position="1874"/>
        <end position="1876"/>
    </location>
</feature>
<feature type="strand" evidence="62">
    <location>
        <begin position="1879"/>
        <end position="1882"/>
    </location>
</feature>
<feature type="helix" evidence="59">
    <location>
        <begin position="1883"/>
        <end position="1890"/>
    </location>
</feature>
<evidence type="ECO:0000250" key="1">
    <source>
        <dbReference type="UniProtKB" id="O08562"/>
    </source>
</evidence>
<evidence type="ECO:0000250" key="2">
    <source>
        <dbReference type="UniProtKB" id="P04775"/>
    </source>
</evidence>
<evidence type="ECO:0000250" key="3">
    <source>
        <dbReference type="UniProtKB" id="P35499"/>
    </source>
</evidence>
<evidence type="ECO:0000250" key="4">
    <source>
        <dbReference type="UniProtKB" id="Q62205"/>
    </source>
</evidence>
<evidence type="ECO:0000255" key="5"/>
<evidence type="ECO:0000255" key="6">
    <source>
        <dbReference type="PROSITE-ProRule" id="PRU00116"/>
    </source>
</evidence>
<evidence type="ECO:0000256" key="7">
    <source>
        <dbReference type="SAM" id="MobiDB-lite"/>
    </source>
</evidence>
<evidence type="ECO:0000269" key="8">
    <source>
    </source>
</evidence>
<evidence type="ECO:0000269" key="9">
    <source>
    </source>
</evidence>
<evidence type="ECO:0000269" key="10">
    <source>
    </source>
</evidence>
<evidence type="ECO:0000269" key="11">
    <source>
    </source>
</evidence>
<evidence type="ECO:0000269" key="12">
    <source>
    </source>
</evidence>
<evidence type="ECO:0000269" key="13">
    <source>
    </source>
</evidence>
<evidence type="ECO:0000269" key="14">
    <source>
    </source>
</evidence>
<evidence type="ECO:0000269" key="15">
    <source>
    </source>
</evidence>
<evidence type="ECO:0000269" key="16">
    <source>
    </source>
</evidence>
<evidence type="ECO:0000269" key="17">
    <source>
    </source>
</evidence>
<evidence type="ECO:0000269" key="18">
    <source>
    </source>
</evidence>
<evidence type="ECO:0000269" key="19">
    <source>
    </source>
</evidence>
<evidence type="ECO:0000269" key="20">
    <source>
    </source>
</evidence>
<evidence type="ECO:0000269" key="21">
    <source>
    </source>
</evidence>
<evidence type="ECO:0000269" key="22">
    <source>
    </source>
</evidence>
<evidence type="ECO:0000269" key="23">
    <source>
    </source>
</evidence>
<evidence type="ECO:0000269" key="24">
    <source>
    </source>
</evidence>
<evidence type="ECO:0000269" key="25">
    <source>
    </source>
</evidence>
<evidence type="ECO:0000269" key="26">
    <source>
    </source>
</evidence>
<evidence type="ECO:0000269" key="27">
    <source>
    </source>
</evidence>
<evidence type="ECO:0000269" key="28">
    <source>
    </source>
</evidence>
<evidence type="ECO:0000269" key="29">
    <source>
    </source>
</evidence>
<evidence type="ECO:0000269" key="30">
    <source>
    </source>
</evidence>
<evidence type="ECO:0000269" key="31">
    <source>
    </source>
</evidence>
<evidence type="ECO:0000269" key="32">
    <source>
    </source>
</evidence>
<evidence type="ECO:0000269" key="33">
    <source>
    </source>
</evidence>
<evidence type="ECO:0000269" key="34">
    <source>
    </source>
</evidence>
<evidence type="ECO:0000269" key="35">
    <source>
    </source>
</evidence>
<evidence type="ECO:0000269" key="36">
    <source>
    </source>
</evidence>
<evidence type="ECO:0000269" key="37">
    <source>
    </source>
</evidence>
<evidence type="ECO:0000269" key="38">
    <source>
    </source>
</evidence>
<evidence type="ECO:0000269" key="39">
    <source>
    </source>
</evidence>
<evidence type="ECO:0000269" key="40">
    <source>
    </source>
</evidence>
<evidence type="ECO:0000269" key="41">
    <source>
    </source>
</evidence>
<evidence type="ECO:0000269" key="42">
    <source>
    </source>
</evidence>
<evidence type="ECO:0000303" key="43">
    <source>
    </source>
</evidence>
<evidence type="ECO:0000303" key="44">
    <source>
    </source>
</evidence>
<evidence type="ECO:0000303" key="45">
    <source>
    </source>
</evidence>
<evidence type="ECO:0000305" key="46"/>
<evidence type="ECO:0000305" key="47">
    <source>
    </source>
</evidence>
<evidence type="ECO:0000312" key="48">
    <source>
        <dbReference type="HGNC" id="HGNC:10597"/>
    </source>
</evidence>
<evidence type="ECO:0007744" key="49">
    <source>
        <dbReference type="PDB" id="5EK0"/>
    </source>
</evidence>
<evidence type="ECO:0007744" key="50">
    <source>
        <dbReference type="PDB" id="6J8G"/>
    </source>
</evidence>
<evidence type="ECO:0007744" key="51">
    <source>
        <dbReference type="PDB" id="6J8H"/>
    </source>
</evidence>
<evidence type="ECO:0007744" key="52">
    <source>
        <dbReference type="PDB" id="6J8I"/>
    </source>
</evidence>
<evidence type="ECO:0007744" key="53">
    <source>
        <dbReference type="PDB" id="6J8J"/>
    </source>
</evidence>
<evidence type="ECO:0007744" key="54">
    <source>
        <dbReference type="PDB" id="6N4Q"/>
    </source>
</evidence>
<evidence type="ECO:0007744" key="55">
    <source>
        <dbReference type="PDB" id="6N4R"/>
    </source>
</evidence>
<evidence type="ECO:0007744" key="56">
    <source>
        <dbReference type="PDB" id="6NT3"/>
    </source>
</evidence>
<evidence type="ECO:0007744" key="57">
    <source>
        <dbReference type="PDB" id="6NT4"/>
    </source>
</evidence>
<evidence type="ECO:0007829" key="58">
    <source>
        <dbReference type="PDB" id="6W6O"/>
    </source>
</evidence>
<evidence type="ECO:0007829" key="59">
    <source>
        <dbReference type="PDB" id="7W9K"/>
    </source>
</evidence>
<evidence type="ECO:0007829" key="60">
    <source>
        <dbReference type="PDB" id="7W9L"/>
    </source>
</evidence>
<evidence type="ECO:0007829" key="61">
    <source>
        <dbReference type="PDB" id="7W9M"/>
    </source>
</evidence>
<evidence type="ECO:0007829" key="62">
    <source>
        <dbReference type="PDB" id="7W9P"/>
    </source>
</evidence>
<evidence type="ECO:0007829" key="63">
    <source>
        <dbReference type="PDB" id="7W9T"/>
    </source>
</evidence>
<evidence type="ECO:0007829" key="64">
    <source>
        <dbReference type="PDB" id="7XMF"/>
    </source>
</evidence>
<evidence type="ECO:0007829" key="65">
    <source>
        <dbReference type="PDB" id="7XMG"/>
    </source>
</evidence>
<evidence type="ECO:0007829" key="66">
    <source>
        <dbReference type="PDB" id="7XVE"/>
    </source>
</evidence>
<evidence type="ECO:0007829" key="67">
    <source>
        <dbReference type="PDB" id="7XVF"/>
    </source>
</evidence>
<evidence type="ECO:0007829" key="68">
    <source>
        <dbReference type="PDB" id="8I5G"/>
    </source>
</evidence>
<evidence type="ECO:0007829" key="69">
    <source>
        <dbReference type="PDB" id="8I5Y"/>
    </source>
</evidence>
<evidence type="ECO:0007829" key="70">
    <source>
        <dbReference type="PDB" id="8S9B"/>
    </source>
</evidence>
<evidence type="ECO:0007829" key="71">
    <source>
        <dbReference type="PDB" id="8THH"/>
    </source>
</evidence>
<evidence type="ECO:0007829" key="72">
    <source>
        <dbReference type="PDB" id="8XMM"/>
    </source>
</evidence>
<evidence type="ECO:0007829" key="73">
    <source>
        <dbReference type="PDB" id="8XMN"/>
    </source>
</evidence>
<evidence type="ECO:0007829" key="74">
    <source>
        <dbReference type="PDB" id="8YHZ"/>
    </source>
</evidence>
<accession>Q15858</accession>
<accession>A1BUH5</accession>
<accession>Q6B4R9</accession>
<accession>Q6B4S0</accession>
<accession>Q6B4S1</accession>
<accession>Q70HX1</accession>
<accession>Q70HX2</accession>
<accession>Q8WTU1</accession>
<accession>Q8WWN4</accession>
<name>SCN9A_HUMAN</name>
<protein>
    <recommendedName>
        <fullName evidence="46">Sodium channel protein type 9 subunit alpha</fullName>
    </recommendedName>
    <alternativeName>
        <fullName evidence="45">Neuroendocrine sodium channel</fullName>
        <shortName evidence="45">hNE-Na</shortName>
    </alternativeName>
    <alternativeName>
        <fullName>Peripheral sodium channel 1</fullName>
        <shortName evidence="1">PN1</shortName>
    </alternativeName>
    <alternativeName>
        <fullName>Sodium channel protein type IX subunit alpha</fullName>
    </alternativeName>
    <alternativeName>
        <fullName>Voltage-gated sodium channel subunit alpha Nav1.7</fullName>
    </alternativeName>
</protein>
<proteinExistence type="evidence at protein level"/>